<keyword id="KW-0175">Coiled coil</keyword>
<keyword id="KW-0403">Intermediate filament</keyword>
<keyword id="KW-0416">Keratin</keyword>
<keyword id="KW-1267">Proteomics identification</keyword>
<keyword id="KW-1185">Reference proteome</keyword>
<protein>
    <recommendedName>
        <fullName>Keratin, type I cuticular Ha1</fullName>
    </recommendedName>
    <alternativeName>
        <fullName>Hair keratin, type I Ha1</fullName>
    </alternativeName>
    <alternativeName>
        <fullName>Keratin-31</fullName>
        <shortName>K31</shortName>
    </alternativeName>
</protein>
<proteinExistence type="evidence at protein level"/>
<dbReference type="EMBL" id="X86570">
    <property type="protein sequence ID" value="CAA60378.1"/>
    <property type="molecule type" value="mRNA"/>
</dbReference>
<dbReference type="EMBL" id="Y16787">
    <property type="protein sequence ID" value="CAA76383.1"/>
    <property type="molecule type" value="Genomic_DNA"/>
</dbReference>
<dbReference type="EMBL" id="CH471152">
    <property type="protein sequence ID" value="EAW60730.1"/>
    <property type="molecule type" value="Genomic_DNA"/>
</dbReference>
<dbReference type="EMBL" id="BC114468">
    <property type="protein sequence ID" value="AAI14469.1"/>
    <property type="molecule type" value="mRNA"/>
</dbReference>
<dbReference type="CCDS" id="CCDS11391.1"/>
<dbReference type="PIR" id="S60034">
    <property type="entry name" value="S60034"/>
</dbReference>
<dbReference type="RefSeq" id="NP_002268.2">
    <property type="nucleotide sequence ID" value="NM_002277.2"/>
</dbReference>
<dbReference type="SMR" id="Q15323"/>
<dbReference type="BioGRID" id="110079">
    <property type="interactions" value="472"/>
</dbReference>
<dbReference type="FunCoup" id="Q15323">
    <property type="interactions" value="248"/>
</dbReference>
<dbReference type="IntAct" id="Q15323">
    <property type="interactions" value="394"/>
</dbReference>
<dbReference type="MINT" id="Q15323"/>
<dbReference type="STRING" id="9606.ENSP00000251645"/>
<dbReference type="GlyGen" id="Q15323">
    <property type="glycosylation" value="2 sites, 1 O-linked glycan (1 site)"/>
</dbReference>
<dbReference type="iPTMnet" id="Q15323"/>
<dbReference type="PhosphoSitePlus" id="Q15323"/>
<dbReference type="SwissPalm" id="Q15323"/>
<dbReference type="BioMuta" id="KRT31"/>
<dbReference type="DMDM" id="209572740"/>
<dbReference type="jPOST" id="Q15323"/>
<dbReference type="MassIVE" id="Q15323"/>
<dbReference type="PaxDb" id="9606-ENSP00000251645"/>
<dbReference type="PeptideAtlas" id="Q15323"/>
<dbReference type="ProteomicsDB" id="60528"/>
<dbReference type="Antibodypedia" id="55450">
    <property type="antibodies" value="182 antibodies from 23 providers"/>
</dbReference>
<dbReference type="DNASU" id="3881"/>
<dbReference type="Ensembl" id="ENST00000251645.3">
    <property type="protein sequence ID" value="ENSP00000251645.2"/>
    <property type="gene ID" value="ENSG00000094796.5"/>
</dbReference>
<dbReference type="Ensembl" id="ENST00000573281.1">
    <property type="protein sequence ID" value="ENSP00000460739.1"/>
    <property type="gene ID" value="ENSG00000262993.1"/>
</dbReference>
<dbReference type="Ensembl" id="ENST00000709592.1">
    <property type="protein sequence ID" value="ENSP00000517784.1"/>
    <property type="gene ID" value="ENSG00000292029.1"/>
</dbReference>
<dbReference type="GeneID" id="3881"/>
<dbReference type="KEGG" id="hsa:3881"/>
<dbReference type="MANE-Select" id="ENST00000251645.3">
    <property type="protein sequence ID" value="ENSP00000251645.2"/>
    <property type="RefSeq nucleotide sequence ID" value="NM_002277.3"/>
    <property type="RefSeq protein sequence ID" value="NP_002268.2"/>
</dbReference>
<dbReference type="UCSC" id="uc002hwn.4">
    <property type="organism name" value="human"/>
</dbReference>
<dbReference type="AGR" id="HGNC:6448"/>
<dbReference type="CTD" id="3881"/>
<dbReference type="DisGeNET" id="3881"/>
<dbReference type="GeneCards" id="KRT31"/>
<dbReference type="HGNC" id="HGNC:6448">
    <property type="gene designation" value="KRT31"/>
</dbReference>
<dbReference type="HPA" id="ENSG00000094796">
    <property type="expression patterns" value="Tissue enriched (skin)"/>
</dbReference>
<dbReference type="MIM" id="601077">
    <property type="type" value="gene"/>
</dbReference>
<dbReference type="neXtProt" id="NX_Q15323"/>
<dbReference type="OpenTargets" id="ENSG00000094796"/>
<dbReference type="PharmGKB" id="PA30237"/>
<dbReference type="VEuPathDB" id="HostDB:ENSG00000094796"/>
<dbReference type="eggNOG" id="ENOG502SNBF">
    <property type="taxonomic scope" value="Eukaryota"/>
</dbReference>
<dbReference type="GeneTree" id="ENSGT00940000163841"/>
<dbReference type="HOGENOM" id="CLU_012560_8_0_1"/>
<dbReference type="InParanoid" id="Q15323"/>
<dbReference type="OMA" id="CVPRTRC"/>
<dbReference type="OrthoDB" id="2441647at2759"/>
<dbReference type="PAN-GO" id="Q15323">
    <property type="GO annotations" value="3 GO annotations based on evolutionary models"/>
</dbReference>
<dbReference type="PhylomeDB" id="Q15323"/>
<dbReference type="TreeFam" id="TF332742"/>
<dbReference type="PathwayCommons" id="Q15323"/>
<dbReference type="Reactome" id="R-HSA-6805567">
    <property type="pathway name" value="Keratinization"/>
</dbReference>
<dbReference type="Reactome" id="R-HSA-6809371">
    <property type="pathway name" value="Formation of the cornified envelope"/>
</dbReference>
<dbReference type="SignaLink" id="Q15323"/>
<dbReference type="BioGRID-ORCS" id="3881">
    <property type="hits" value="22 hits in 1143 CRISPR screens"/>
</dbReference>
<dbReference type="GeneWiki" id="KRT31"/>
<dbReference type="GenomeRNAi" id="3881"/>
<dbReference type="Pharos" id="Q15323">
    <property type="development level" value="Tbio"/>
</dbReference>
<dbReference type="PRO" id="PR:Q15323"/>
<dbReference type="Proteomes" id="UP000005640">
    <property type="component" value="Chromosome 17"/>
</dbReference>
<dbReference type="RNAct" id="Q15323">
    <property type="molecule type" value="protein"/>
</dbReference>
<dbReference type="Bgee" id="ENSG00000094796">
    <property type="expression patterns" value="Expressed in cerebellum and 76 other cell types or tissues"/>
</dbReference>
<dbReference type="GO" id="GO:0005856">
    <property type="term" value="C:cytoskeleton"/>
    <property type="evidence" value="ECO:0000318"/>
    <property type="project" value="GO_Central"/>
</dbReference>
<dbReference type="GO" id="GO:0005829">
    <property type="term" value="C:cytosol"/>
    <property type="evidence" value="ECO:0000304"/>
    <property type="project" value="Reactome"/>
</dbReference>
<dbReference type="GO" id="GO:0070062">
    <property type="term" value="C:extracellular exosome"/>
    <property type="evidence" value="ECO:0007005"/>
    <property type="project" value="UniProtKB"/>
</dbReference>
<dbReference type="GO" id="GO:0005615">
    <property type="term" value="C:extracellular space"/>
    <property type="evidence" value="ECO:0007005"/>
    <property type="project" value="UniProtKB"/>
</dbReference>
<dbReference type="GO" id="GO:0005882">
    <property type="term" value="C:intermediate filament"/>
    <property type="evidence" value="ECO:0000304"/>
    <property type="project" value="ProtInc"/>
</dbReference>
<dbReference type="GO" id="GO:0005200">
    <property type="term" value="F:structural constituent of cytoskeleton"/>
    <property type="evidence" value="ECO:0000304"/>
    <property type="project" value="ProtInc"/>
</dbReference>
<dbReference type="GO" id="GO:0008544">
    <property type="term" value="P:epidermis development"/>
    <property type="evidence" value="ECO:0000304"/>
    <property type="project" value="ProtInc"/>
</dbReference>
<dbReference type="GO" id="GO:0030855">
    <property type="term" value="P:epithelial cell differentiation"/>
    <property type="evidence" value="ECO:0000318"/>
    <property type="project" value="GO_Central"/>
</dbReference>
<dbReference type="GO" id="GO:0045109">
    <property type="term" value="P:intermediate filament organization"/>
    <property type="evidence" value="ECO:0000318"/>
    <property type="project" value="GO_Central"/>
</dbReference>
<dbReference type="FunFam" id="1.20.5.1160:FF:000002">
    <property type="entry name" value="Type I keratin 10"/>
    <property type="match status" value="1"/>
</dbReference>
<dbReference type="FunFam" id="1.20.5.170:FF:000002">
    <property type="entry name" value="Type I keratin KA11"/>
    <property type="match status" value="1"/>
</dbReference>
<dbReference type="FunFam" id="1.20.5.500:FF:000001">
    <property type="entry name" value="Type II keratin 23"/>
    <property type="match status" value="1"/>
</dbReference>
<dbReference type="Gene3D" id="1.20.5.170">
    <property type="match status" value="1"/>
</dbReference>
<dbReference type="Gene3D" id="1.20.5.500">
    <property type="entry name" value="Single helix bin"/>
    <property type="match status" value="1"/>
</dbReference>
<dbReference type="Gene3D" id="1.20.5.1160">
    <property type="entry name" value="Vasodilator-stimulated phosphoprotein"/>
    <property type="match status" value="1"/>
</dbReference>
<dbReference type="InterPro" id="IPR018039">
    <property type="entry name" value="IF_conserved"/>
</dbReference>
<dbReference type="InterPro" id="IPR039008">
    <property type="entry name" value="IF_rod_dom"/>
</dbReference>
<dbReference type="InterPro" id="IPR002957">
    <property type="entry name" value="Keratin_I"/>
</dbReference>
<dbReference type="PANTHER" id="PTHR23239">
    <property type="entry name" value="INTERMEDIATE FILAMENT"/>
    <property type="match status" value="1"/>
</dbReference>
<dbReference type="PANTHER" id="PTHR23239:SF97">
    <property type="entry name" value="KERATIN, TYPE I CUTICULAR HA1"/>
    <property type="match status" value="1"/>
</dbReference>
<dbReference type="Pfam" id="PF00038">
    <property type="entry name" value="Filament"/>
    <property type="match status" value="1"/>
</dbReference>
<dbReference type="PRINTS" id="PR01248">
    <property type="entry name" value="TYPE1KERATIN"/>
</dbReference>
<dbReference type="SMART" id="SM01391">
    <property type="entry name" value="Filament"/>
    <property type="match status" value="1"/>
</dbReference>
<dbReference type="SUPFAM" id="SSF64593">
    <property type="entry name" value="Intermediate filament protein, coiled coil region"/>
    <property type="match status" value="2"/>
</dbReference>
<dbReference type="PROSITE" id="PS00226">
    <property type="entry name" value="IF_ROD_1"/>
    <property type="match status" value="1"/>
</dbReference>
<dbReference type="PROSITE" id="PS51842">
    <property type="entry name" value="IF_ROD_2"/>
    <property type="match status" value="1"/>
</dbReference>
<comment type="interaction">
    <interactant intactId="EBI-948001">
        <id>Q15323</id>
    </interactant>
    <interactant intactId="EBI-2809489">
        <id>Q9NQ94</id>
        <label>A1CF</label>
    </interactant>
    <organismsDiffer>false</organismsDiffer>
    <experiments>3</experiments>
</comment>
<comment type="interaction">
    <interactant intactId="EBI-948001">
        <id>Q15323</id>
    </interactant>
    <interactant intactId="EBI-743598">
        <id>Q9NYB9</id>
        <label>ABI2</label>
    </interactant>
    <organismsDiffer>false</organismsDiffer>
    <experiments>5</experiments>
</comment>
<comment type="interaction">
    <interactant intactId="EBI-948001">
        <id>Q15323</id>
    </interactant>
    <interactant intactId="EBI-742038">
        <id>Q9P2A4</id>
        <label>ABI3</label>
    </interactant>
    <organismsDiffer>false</organismsDiffer>
    <experiments>3</experiments>
</comment>
<comment type="interaction">
    <interactant intactId="EBI-948001">
        <id>Q15323</id>
    </interactant>
    <interactant intactId="EBI-9254597">
        <id>P00519-2</id>
        <label>ABL1</label>
    </interactant>
    <organismsDiffer>false</organismsDiffer>
    <experiments>3</experiments>
</comment>
<comment type="interaction">
    <interactant intactId="EBI-948001">
        <id>Q15323</id>
    </interactant>
    <interactant intactId="EBI-2559426">
        <id>Q9NZ32</id>
        <label>ACTR10</label>
    </interactant>
    <organismsDiffer>false</organismsDiffer>
    <experiments>3</experiments>
</comment>
<comment type="interaction">
    <interactant intactId="EBI-948001">
        <id>Q15323</id>
    </interactant>
    <interactant intactId="EBI-712648">
        <id>O95994</id>
        <label>AGR2</label>
    </interactant>
    <organismsDiffer>false</organismsDiffer>
    <experiments>6</experiments>
</comment>
<comment type="interaction">
    <interactant intactId="EBI-948001">
        <id>Q15323</id>
    </interactant>
    <interactant intactId="EBI-727098">
        <id>P21549</id>
        <label>AGXT</label>
    </interactant>
    <organismsDiffer>false</organismsDiffer>
    <experiments>3</experiments>
</comment>
<comment type="interaction">
    <interactant intactId="EBI-948001">
        <id>Q15323</id>
    </interactant>
    <interactant intactId="EBI-745226">
        <id>Q13155</id>
        <label>AIMP2</label>
    </interactant>
    <organismsDiffer>false</organismsDiffer>
    <experiments>3</experiments>
</comment>
<comment type="interaction">
    <interactant intactId="EBI-948001">
        <id>Q15323</id>
    </interactant>
    <interactant intactId="EBI-8643161">
        <id>Q9NX04</id>
        <label>AIRIM</label>
    </interactant>
    <organismsDiffer>false</organismsDiffer>
    <experiments>6</experiments>
</comment>
<comment type="interaction">
    <interactant intactId="EBI-948001">
        <id>Q15323</id>
    </interactant>
    <interactant intactId="EBI-748869">
        <id>O95154</id>
        <label>AKR7A3</label>
    </interactant>
    <organismsDiffer>false</organismsDiffer>
    <experiments>3</experiments>
</comment>
<comment type="interaction">
    <interactant intactId="EBI-948001">
        <id>Q15323</id>
    </interactant>
    <interactant intactId="EBI-2558314">
        <id>P43353</id>
        <label>ALDH3B1</label>
    </interactant>
    <organismsDiffer>false</organismsDiffer>
    <experiments>3</experiments>
</comment>
<comment type="interaction">
    <interactant intactId="EBI-948001">
        <id>Q15323</id>
    </interactant>
    <interactant intactId="EBI-17286414">
        <id>A2BDD9</id>
        <label>AMOT</label>
    </interactant>
    <organismsDiffer>false</organismsDiffer>
    <experiments>3</experiments>
</comment>
<comment type="interaction">
    <interactant intactId="EBI-948001">
        <id>Q15323</id>
    </interactant>
    <interactant intactId="EBI-3891843">
        <id>Q4VCS5-2</id>
        <label>AMOT</label>
    </interactant>
    <organismsDiffer>false</organismsDiffer>
    <experiments>3</experiments>
</comment>
<comment type="interaction">
    <interactant intactId="EBI-948001">
        <id>Q15323</id>
    </interactant>
    <interactant intactId="EBI-10187270">
        <id>Q9Y2J4-4</id>
        <label>AMOTL2</label>
    </interactant>
    <organismsDiffer>false</organismsDiffer>
    <experiments>3</experiments>
</comment>
<comment type="interaction">
    <interactant intactId="EBI-948001">
        <id>Q15323</id>
    </interactant>
    <interactant intactId="EBI-744859">
        <id>Q96IX9</id>
        <label>ANKRD36BP1</label>
    </interactant>
    <organismsDiffer>false</organismsDiffer>
    <experiments>3</experiments>
</comment>
<comment type="interaction">
    <interactant intactId="EBI-948001">
        <id>Q15323</id>
    </interactant>
    <interactant intactId="EBI-11954519">
        <id>Q49AR9</id>
        <label>ANKS1A</label>
    </interactant>
    <organismsDiffer>false</organismsDiffer>
    <experiments>3</experiments>
</comment>
<comment type="interaction">
    <interactant intactId="EBI-948001">
        <id>Q15323</id>
    </interactant>
    <interactant intactId="EBI-745213">
        <id>P29972</id>
        <label>AQP1</label>
    </interactant>
    <organismsDiffer>false</organismsDiffer>
    <experiments>3</experiments>
</comment>
<comment type="interaction">
    <interactant intactId="EBI-948001">
        <id>Q15323</id>
    </interactant>
    <interactant intactId="EBI-746103">
        <id>P55064</id>
        <label>AQP5</label>
    </interactant>
    <organismsDiffer>false</organismsDiffer>
    <experiments>3</experiments>
</comment>
<comment type="interaction">
    <interactant intactId="EBI-948001">
        <id>Q15323</id>
    </interactant>
    <interactant intactId="EBI-5458244">
        <id>Q99856</id>
        <label>ARID3A</label>
    </interactant>
    <organismsDiffer>false</organismsDiffer>
    <experiments>3</experiments>
</comment>
<comment type="interaction">
    <interactant intactId="EBI-948001">
        <id>Q15323</id>
    </interactant>
    <interactant intactId="EBI-742909">
        <id>Q9H6L4</id>
        <label>ARMC7</label>
    </interactant>
    <organismsDiffer>false</organismsDiffer>
    <experiments>6</experiments>
</comment>
<comment type="interaction">
    <interactant intactId="EBI-948001">
        <id>Q15323</id>
    </interactant>
    <interactant intactId="EBI-10266832">
        <id>Q8N5N6</id>
        <label>ARSJ</label>
    </interactant>
    <organismsDiffer>false</organismsDiffer>
    <experiments>3</experiments>
</comment>
<comment type="interaction">
    <interactant intactId="EBI-948001">
        <id>Q15323</id>
    </interactant>
    <interactant intactId="EBI-743231">
        <id>O95671</id>
        <label>ASMTL</label>
    </interactant>
    <organismsDiffer>false</organismsDiffer>
    <experiments>6</experiments>
</comment>
<comment type="interaction">
    <interactant intactId="EBI-948001">
        <id>Q15323</id>
    </interactant>
    <interactant intactId="EBI-1993677">
        <id>Q9BZE9</id>
        <label>ASPSCR1</label>
    </interactant>
    <organismsDiffer>false</organismsDiffer>
    <experiments>3</experiments>
</comment>
<comment type="interaction">
    <interactant intactId="EBI-948001">
        <id>Q15323</id>
    </interactant>
    <interactant intactId="EBI-727146">
        <id>Q7Z3C6</id>
        <label>ATG9A</label>
    </interactant>
    <organismsDiffer>false</organismsDiffer>
    <experiments>3</experiments>
</comment>
<comment type="interaction">
    <interactant intactId="EBI-948001">
        <id>Q15323</id>
    </interactant>
    <interactant intactId="EBI-12006308">
        <id>Q7Z3C6-3</id>
        <label>ATG9A</label>
    </interactant>
    <organismsDiffer>false</organismsDiffer>
    <experiments>3</experiments>
</comment>
<comment type="interaction">
    <interactant intactId="EBI-948001">
        <id>Q15323</id>
    </interactant>
    <interactant intactId="EBI-310660">
        <id>Q9ULK2</id>
        <label>ATXN7L1</label>
    </interactant>
    <organismsDiffer>false</organismsDiffer>
    <experiments>3</experiments>
</comment>
<comment type="interaction">
    <interactant intactId="EBI-948001">
        <id>Q15323</id>
    </interactant>
    <interactant intactId="EBI-8640233">
        <id>Q5T686</id>
        <label>AVPI1</label>
    </interactant>
    <organismsDiffer>false</organismsDiffer>
    <experiments>3</experiments>
</comment>
<comment type="interaction">
    <interactant intactId="EBI-948001">
        <id>Q15323</id>
    </interactant>
    <interactant intactId="EBI-10319970">
        <id>Q9UBV7</id>
        <label>B4GALT7</label>
    </interactant>
    <organismsDiffer>false</organismsDiffer>
    <experiments>3</experiments>
</comment>
<comment type="interaction">
    <interactant intactId="EBI-948001">
        <id>Q15323</id>
    </interactant>
    <interactant intactId="EBI-700771">
        <id>Q92934</id>
        <label>BAD</label>
    </interactant>
    <organismsDiffer>false</organismsDiffer>
    <experiments>3</experiments>
</comment>
<comment type="interaction">
    <interactant intactId="EBI-948001">
        <id>Q15323</id>
    </interactant>
    <interactant intactId="EBI-1050106">
        <id>O75934</id>
        <label>BCAS2</label>
    </interactant>
    <organismsDiffer>false</organismsDiffer>
    <experiments>4</experiments>
</comment>
<comment type="interaction">
    <interactant intactId="EBI-948001">
        <id>Q15323</id>
    </interactant>
    <interactant intactId="EBI-7162175">
        <id>Q9HBH7</id>
        <label>BEX1</label>
    </interactant>
    <organismsDiffer>false</organismsDiffer>
    <experiments>3</experiments>
</comment>
<comment type="interaction">
    <interactant intactId="EBI-948001">
        <id>Q15323</id>
    </interactant>
    <interactant intactId="EBI-745073">
        <id>Q9BXY8</id>
        <label>BEX2</label>
    </interactant>
    <organismsDiffer>false</organismsDiffer>
    <experiments>6</experiments>
</comment>
<comment type="interaction">
    <interactant intactId="EBI-948001">
        <id>Q15323</id>
    </interactant>
    <interactant intactId="EBI-10229433">
        <id>Q13515</id>
        <label>BFSP2</label>
    </interactant>
    <organismsDiffer>false</organismsDiffer>
    <experiments>3</experiments>
</comment>
<comment type="interaction">
    <interactant intactId="EBI-948001">
        <id>Q15323</id>
    </interactant>
    <interactant intactId="EBI-17508719">
        <id>Q7RTU4</id>
        <label>BHLHA9</label>
    </interactant>
    <organismsDiffer>false</organismsDiffer>
    <experiments>3</experiments>
</comment>
<comment type="interaction">
    <interactant intactId="EBI-948001">
        <id>Q15323</id>
    </interactant>
    <interactant intactId="EBI-12040255">
        <id>Q0VDD7-2</id>
        <label>BRME1</label>
    </interactant>
    <organismsDiffer>false</organismsDiffer>
    <experiments>3</experiments>
</comment>
<comment type="interaction">
    <interactant intactId="EBI-948001">
        <id>Q15323</id>
    </interactant>
    <interactant intactId="EBI-6590057">
        <id>P35070</id>
        <label>BTC</label>
    </interactant>
    <organismsDiffer>false</organismsDiffer>
    <experiments>6</experiments>
</comment>
<comment type="interaction">
    <interactant intactId="EBI-948001">
        <id>Q15323</id>
    </interactant>
    <interactant intactId="EBI-358049">
        <id>Q13895</id>
        <label>BYSL</label>
    </interactant>
    <organismsDiffer>false</organismsDiffer>
    <experiments>3</experiments>
</comment>
<comment type="interaction">
    <interactant intactId="EBI-948001">
        <id>Q15323</id>
    </interactant>
    <interactant intactId="EBI-2859285">
        <id>Q9NVV2</id>
        <label>C19orf73</label>
    </interactant>
    <organismsDiffer>false</organismsDiffer>
    <experiments>3</experiments>
</comment>
<comment type="interaction">
    <interactant intactId="EBI-948001">
        <id>Q15323</id>
    </interactant>
    <interactant intactId="EBI-747505">
        <id>Q8TAB5</id>
        <label>C1orf216</label>
    </interactant>
    <organismsDiffer>false</organismsDiffer>
    <experiments>6</experiments>
</comment>
<comment type="interaction">
    <interactant intactId="EBI-948001">
        <id>Q15323</id>
    </interactant>
    <interactant intactId="EBI-739879">
        <id>Q53TS8</id>
        <label>C2CD6</label>
    </interactant>
    <organismsDiffer>false</organismsDiffer>
    <experiments>6</experiments>
</comment>
<comment type="interaction">
    <interactant intactId="EBI-948001">
        <id>Q15323</id>
    </interactant>
    <interactant intactId="EBI-905851">
        <id>P01024</id>
        <label>C3</label>
    </interactant>
    <organismsDiffer>false</organismsDiffer>
    <experiments>3</experiments>
</comment>
<comment type="interaction">
    <interactant intactId="EBI-948001">
        <id>Q15323</id>
    </interactant>
    <interactant intactId="EBI-10173955">
        <id>A6NFR6-4</id>
        <label>C5orf60</label>
    </interactant>
    <organismsDiffer>false</organismsDiffer>
    <experiments>3</experiments>
</comment>
<comment type="interaction">
    <interactant intactId="EBI-948001">
        <id>Q15323</id>
    </interactant>
    <interactant intactId="EBI-10265475">
        <id>Q8N4G4</id>
        <label>CA6</label>
    </interactant>
    <organismsDiffer>false</organismsDiffer>
    <experiments>3</experiments>
</comment>
<comment type="interaction">
    <interactant intactId="EBI-948001">
        <id>Q15323</id>
    </interactant>
    <interactant intactId="EBI-751319">
        <id>Q9H257</id>
        <label>CARD9</label>
    </interactant>
    <organismsDiffer>false</organismsDiffer>
    <experiments>3</experiments>
</comment>
<comment type="interaction">
    <interactant intactId="EBI-948001">
        <id>Q15323</id>
    </interactant>
    <interactant intactId="EBI-10258233">
        <id>Q7Z7H3</id>
        <label>CATIP</label>
    </interactant>
    <organismsDiffer>false</organismsDiffer>
    <experiments>6</experiments>
</comment>
<comment type="interaction">
    <interactant intactId="EBI-948001">
        <id>Q15323</id>
    </interactant>
    <interactant intactId="EBI-744545">
        <id>Q8NEC5</id>
        <label>CATSPER1</label>
    </interactant>
    <organismsDiffer>false</organismsDiffer>
    <experiments>3</experiments>
</comment>
<comment type="interaction">
    <interactant intactId="EBI-948001">
        <id>Q15323</id>
    </interactant>
    <interactant intactId="EBI-712912">
        <id>Q9HC52</id>
        <label>CBX8</label>
    </interactant>
    <organismsDiffer>false</organismsDiffer>
    <experiments>3</experiments>
</comment>
<comment type="interaction">
    <interactant intactId="EBI-948001">
        <id>Q15323</id>
    </interactant>
    <interactant intactId="EBI-745040">
        <id>Q8NEF3</id>
        <label>CCDC112</label>
    </interactant>
    <organismsDiffer>false</organismsDiffer>
    <experiments>3</experiments>
</comment>
<comment type="interaction">
    <interactant intactId="EBI-948001">
        <id>Q15323</id>
    </interactant>
    <interactant intactId="EBI-744311">
        <id>Q8IYX3</id>
        <label>CCDC116</label>
    </interactant>
    <organismsDiffer>false</organismsDiffer>
    <experiments>3</experiments>
</comment>
<comment type="interaction">
    <interactant intactId="EBI-948001">
        <id>Q15323</id>
    </interactant>
    <interactant intactId="EBI-744556">
        <id>Q96HB5</id>
        <label>CCDC120</label>
    </interactant>
    <organismsDiffer>false</organismsDiffer>
    <experiments>3</experiments>
</comment>
<comment type="interaction">
    <interactant intactId="EBI-948001">
        <id>Q15323</id>
    </interactant>
    <interactant intactId="EBI-10185348">
        <id>Q96HB5-4</id>
        <label>CCDC120</label>
    </interactant>
    <organismsDiffer>false</organismsDiffer>
    <experiments>4</experiments>
</comment>
<comment type="interaction">
    <interactant intactId="EBI-948001">
        <id>Q15323</id>
    </interactant>
    <interactant intactId="EBI-10749669">
        <id>Q8IYE0</id>
        <label>CCDC146</label>
    </interactant>
    <organismsDiffer>false</organismsDiffer>
    <experiments>3</experiments>
</comment>
<comment type="interaction">
    <interactant intactId="EBI-948001">
        <id>Q15323</id>
    </interactant>
    <interactant intactId="EBI-719840">
        <id>Q96LX7</id>
        <label>CCDC17</label>
    </interactant>
    <organismsDiffer>false</organismsDiffer>
    <experiments>3</experiments>
</comment>
<comment type="interaction">
    <interactant intactId="EBI-948001">
        <id>Q15323</id>
    </interactant>
    <interactant intactId="EBI-10181422">
        <id>A0A1B0GWI1</id>
        <label>CCDC196</label>
    </interactant>
    <organismsDiffer>false</organismsDiffer>
    <experiments>6</experiments>
</comment>
<comment type="interaction">
    <interactant intactId="EBI-948001">
        <id>Q15323</id>
    </interactant>
    <interactant intactId="EBI-11748295">
        <id>E9PSE9</id>
        <label>CCDC198</label>
    </interactant>
    <organismsDiffer>false</organismsDiffer>
    <experiments>3</experiments>
</comment>
<comment type="interaction">
    <interactant intactId="EBI-948001">
        <id>Q15323</id>
    </interactant>
    <interactant intactId="EBI-746041">
        <id>Q8TC90</id>
        <label>CCER1</label>
    </interactant>
    <organismsDiffer>false</organismsDiffer>
    <experiments>3</experiments>
</comment>
<comment type="interaction">
    <interactant intactId="EBI-948001">
        <id>Q15323</id>
    </interactant>
    <interactant intactId="EBI-10175300">
        <id>Q8TD31-3</id>
        <label>CCHCR1</label>
    </interactant>
    <organismsDiffer>false</organismsDiffer>
    <experiments>6</experiments>
</comment>
<comment type="interaction">
    <interactant intactId="EBI-948001">
        <id>Q15323</id>
    </interactant>
    <interactant intactId="EBI-395261">
        <id>P24863</id>
        <label>CCNC</label>
    </interactant>
    <organismsDiffer>false</organismsDiffer>
    <experiments>6</experiments>
</comment>
<comment type="interaction">
    <interactant intactId="EBI-948001">
        <id>Q15323</id>
    </interactant>
    <interactant intactId="EBI-3906571">
        <id>P20138</id>
        <label>CD33</label>
    </interactant>
    <organismsDiffer>false</organismsDiffer>
    <experiments>6</experiments>
</comment>
<comment type="interaction">
    <interactant intactId="EBI-948001">
        <id>Q15323</id>
    </interactant>
    <interactant intactId="EBI-10260504">
        <id>Q86Y33</id>
        <label>CDC20B</label>
    </interactant>
    <organismsDiffer>false</organismsDiffer>
    <experiments>3</experiments>
</comment>
<comment type="interaction">
    <interactant intactId="EBI-948001">
        <id>Q15323</id>
    </interactant>
    <interactant intactId="EBI-746238">
        <id>Q07002</id>
        <label>CDK18</label>
    </interactant>
    <organismsDiffer>false</organismsDiffer>
    <experiments>6</experiments>
</comment>
<comment type="interaction">
    <interactant intactId="EBI-948001">
        <id>Q15323</id>
    </interactant>
    <interactant intactId="EBI-375077">
        <id>P38936</id>
        <label>CDKN1A</label>
    </interactant>
    <organismsDiffer>false</organismsDiffer>
    <experiments>6</experiments>
</comment>
<comment type="interaction">
    <interactant intactId="EBI-948001">
        <id>Q15323</id>
    </interactant>
    <interactant intactId="EBI-711290">
        <id>P42773</id>
        <label>CDKN2C</label>
    </interactant>
    <organismsDiffer>false</organismsDiffer>
    <experiments>3</experiments>
</comment>
<comment type="interaction">
    <interactant intactId="EBI-948001">
        <id>Q15323</id>
    </interactant>
    <interactant intactId="EBI-11063830">
        <id>Q86X02</id>
        <label>CDR2L</label>
    </interactant>
    <organismsDiffer>false</organismsDiffer>
    <experiments>3</experiments>
</comment>
<comment type="interaction">
    <interactant intactId="EBI-948001">
        <id>Q15323</id>
    </interactant>
    <interactant intactId="EBI-308614">
        <id>Q86XR8</id>
        <label>CEP57</label>
    </interactant>
    <organismsDiffer>false</organismsDiffer>
    <experiments>3</experiments>
</comment>
<comment type="interaction">
    <interactant intactId="EBI-948001">
        <id>Q15323</id>
    </interactant>
    <interactant intactId="EBI-1104570">
        <id>Q8IYX8</id>
        <label>CEP57L1</label>
    </interactant>
    <organismsDiffer>false</organismsDiffer>
    <experiments>3</experiments>
</comment>
<comment type="interaction">
    <interactant intactId="EBI-948001">
        <id>Q15323</id>
    </interactant>
    <interactant intactId="EBI-10181988">
        <id>Q8IYX8-2</id>
        <label>CEP57L1</label>
    </interactant>
    <organismsDiffer>false</organismsDiffer>
    <experiments>3</experiments>
</comment>
<comment type="interaction">
    <interactant intactId="EBI-948001">
        <id>Q15323</id>
    </interactant>
    <interactant intactId="EBI-739624">
        <id>Q8NHQ1</id>
        <label>CEP70</label>
    </interactant>
    <organismsDiffer>false</organismsDiffer>
    <experiments>3</experiments>
</comment>
<comment type="interaction">
    <interactant intactId="EBI-948001">
        <id>Q15323</id>
    </interactant>
    <interactant intactId="EBI-749051">
        <id>Q8IYR0</id>
        <label>CFAP206</label>
    </interactant>
    <organismsDiffer>false</organismsDiffer>
    <experiments>3</experiments>
</comment>
<comment type="interaction">
    <interactant intactId="EBI-948001">
        <id>Q15323</id>
    </interactant>
    <interactant intactId="EBI-742422">
        <id>Q96M91</id>
        <label>CFAP53</label>
    </interactant>
    <organismsDiffer>false</organismsDiffer>
    <experiments>3</experiments>
</comment>
<comment type="interaction">
    <interactant intactId="EBI-948001">
        <id>Q15323</id>
    </interactant>
    <interactant intactId="EBI-12039847">
        <id>A4QMS7</id>
        <label>CFAP90</label>
    </interactant>
    <organismsDiffer>false</organismsDiffer>
    <experiments>3</experiments>
</comment>
<comment type="interaction">
    <interactant intactId="EBI-948001">
        <id>Q15323</id>
    </interactant>
    <interactant intactId="EBI-2321769">
        <id>Q9Y6H1</id>
        <label>CHCHD2</label>
    </interactant>
    <organismsDiffer>false</organismsDiffer>
    <experiments>3</experiments>
</comment>
<comment type="interaction">
    <interactant intactId="EBI-948001">
        <id>Q15323</id>
    </interactant>
    <interactant intactId="EBI-9008836">
        <id>P07510</id>
        <label>CHRNG</label>
    </interactant>
    <organismsDiffer>false</organismsDiffer>
    <experiments>4</experiments>
</comment>
<comment type="interaction">
    <interactant intactId="EBI-948001">
        <id>Q15323</id>
    </interactant>
    <interactant intactId="EBI-11979451">
        <id>P07510-2</id>
        <label>CHRNG</label>
    </interactant>
    <organismsDiffer>false</organismsDiffer>
    <experiments>6</experiments>
</comment>
<comment type="interaction">
    <interactant intactId="EBI-948001">
        <id>Q15323</id>
    </interactant>
    <interactant intactId="EBI-12093053">
        <id>O43247-2</id>
        <label>CIMIP4</label>
    </interactant>
    <organismsDiffer>false</organismsDiffer>
    <experiments>3</experiments>
</comment>
<comment type="interaction">
    <interactant intactId="EBI-948001">
        <id>Q15323</id>
    </interactant>
    <interactant intactId="EBI-11980535">
        <id>P51800-3</id>
        <label>CLCNKA</label>
    </interactant>
    <organismsDiffer>false</organismsDiffer>
    <experiments>3</experiments>
</comment>
<comment type="interaction">
    <interactant intactId="EBI-948001">
        <id>Q15323</id>
    </interactant>
    <interactant intactId="EBI-12256978">
        <id>Q8N6F1-2</id>
        <label>CLDN19</label>
    </interactant>
    <organismsDiffer>false</organismsDiffer>
    <experiments>3</experiments>
</comment>
<comment type="interaction">
    <interactant intactId="EBI-948001">
        <id>Q15323</id>
    </interactant>
    <interactant intactId="EBI-751440">
        <id>P57739</id>
        <label>CLDN2</label>
    </interactant>
    <organismsDiffer>false</organismsDiffer>
    <experiments>3</experiments>
</comment>
<comment type="interaction">
    <interactant intactId="EBI-948001">
        <id>Q15323</id>
    </interactant>
    <interactant intactId="EBI-10173491">
        <id>A5D8T8</id>
        <label>CLEC18A</label>
    </interactant>
    <organismsDiffer>false</organismsDiffer>
    <experiments>3</experiments>
</comment>
<comment type="interaction">
    <interactant intactId="EBI-948001">
        <id>Q15323</id>
    </interactant>
    <interactant intactId="EBI-741032">
        <id>Q8NE01</id>
        <label>CNNM3</label>
    </interactant>
    <organismsDiffer>false</organismsDiffer>
    <experiments>3</experiments>
</comment>
<comment type="interaction">
    <interactant intactId="EBI-948001">
        <id>Q15323</id>
    </interactant>
    <interactant intactId="EBI-1050897">
        <id>P26441</id>
        <label>CNTF</label>
    </interactant>
    <organismsDiffer>false</organismsDiffer>
    <experiments>3</experiments>
</comment>
<comment type="interaction">
    <interactant intactId="EBI-948001">
        <id>Q15323</id>
    </interactant>
    <interactant intactId="EBI-5458774">
        <id>Q86WW8</id>
        <label>COA5</label>
    </interactant>
    <organismsDiffer>false</organismsDiffer>
    <experiments>3</experiments>
</comment>
<comment type="interaction">
    <interactant intactId="EBI-948001">
        <id>Q15323</id>
    </interactant>
    <interactant intactId="EBI-10200977">
        <id>P21964-2</id>
        <label>COMT</label>
    </interactant>
    <organismsDiffer>false</organismsDiffer>
    <experiments>3</experiments>
</comment>
<comment type="interaction">
    <interactant intactId="EBI-948001">
        <id>Q15323</id>
    </interactant>
    <interactant intactId="EBI-715032">
        <id>P20674</id>
        <label>COX5A</label>
    </interactant>
    <organismsDiffer>false</organismsDiffer>
    <experiments>3</experiments>
</comment>
<comment type="interaction">
    <interactant intactId="EBI-948001">
        <id>Q15323</id>
    </interactant>
    <interactant intactId="EBI-1053725">
        <id>P10606</id>
        <label>COX5B</label>
    </interactant>
    <organismsDiffer>false</organismsDiffer>
    <experiments>3</experiments>
</comment>
<comment type="interaction">
    <interactant intactId="EBI-948001">
        <id>Q15323</id>
    </interactant>
    <interactant intactId="EBI-739773">
        <id>Q9BSW2</id>
        <label>CRACR2A</label>
    </interactant>
    <organismsDiffer>false</organismsDiffer>
    <experiments>3</experiments>
</comment>
<comment type="interaction">
    <interactant intactId="EBI-948001">
        <id>Q15323</id>
    </interactant>
    <interactant intactId="EBI-10192698">
        <id>Q02930-3</id>
        <label>CREB5</label>
    </interactant>
    <organismsDiffer>false</organismsDiffer>
    <experiments>3</experiments>
</comment>
<comment type="interaction">
    <interactant intactId="EBI-948001">
        <id>Q15323</id>
    </interactant>
    <interactant intactId="EBI-3870390">
        <id>P06850</id>
        <label>CRH</label>
    </interactant>
    <organismsDiffer>false</organismsDiffer>
    <experiments>3</experiments>
</comment>
<comment type="interaction">
    <interactant intactId="EBI-948001">
        <id>Q15323</id>
    </interactant>
    <interactant intactId="EBI-5462635">
        <id>P08311</id>
        <label>CTSG</label>
    </interactant>
    <organismsDiffer>false</organismsDiffer>
    <experiments>3</experiments>
</comment>
<comment type="interaction">
    <interactant intactId="EBI-948001">
        <id>Q15323</id>
    </interactant>
    <interactant intactId="EBI-3867333">
        <id>A8MQ03</id>
        <label>CYSRT1</label>
    </interactant>
    <organismsDiffer>false</organismsDiffer>
    <experiments>3</experiments>
</comment>
<comment type="interaction">
    <interactant intactId="EBI-948001">
        <id>Q15323</id>
    </interactant>
    <interactant intactId="EBI-745369">
        <id>Q9H4E7</id>
        <label>DEF6</label>
    </interactant>
    <organismsDiffer>false</organismsDiffer>
    <experiments>3</experiments>
</comment>
<comment type="interaction">
    <interactant intactId="EBI-948001">
        <id>Q15323</id>
    </interactant>
    <interactant intactId="EBI-742953">
        <id>Q9BY27</id>
        <label>DGCR6L</label>
    </interactant>
    <organismsDiffer>false</organismsDiffer>
    <experiments>3</experiments>
</comment>
<comment type="interaction">
    <interactant intactId="EBI-948001">
        <id>Q15323</id>
    </interactant>
    <interactant intactId="EBI-9679045">
        <id>Q9NQL9</id>
        <label>DMRT3</label>
    </interactant>
    <organismsDiffer>false</organismsDiffer>
    <experiments>6</experiments>
</comment>
<comment type="interaction">
    <interactant intactId="EBI-948001">
        <id>Q15323</id>
    </interactant>
    <interactant intactId="EBI-448771">
        <id>Q92608</id>
        <label>DOCK2</label>
    </interactant>
    <organismsDiffer>false</organismsDiffer>
    <experiments>3</experiments>
</comment>
<comment type="interaction">
    <interactant intactId="EBI-948001">
        <id>Q15323</id>
    </interactant>
    <interactant intactId="EBI-740402">
        <id>O60941</id>
        <label>DTNB</label>
    </interactant>
    <organismsDiffer>false</organismsDiffer>
    <experiments>3</experiments>
</comment>
<comment type="interaction">
    <interactant intactId="EBI-948001">
        <id>Q15323</id>
    </interactant>
    <interactant intactId="EBI-11984733">
        <id>O60941-5</id>
        <label>DTNB</label>
    </interactant>
    <organismsDiffer>false</organismsDiffer>
    <experiments>3</experiments>
</comment>
<comment type="interaction">
    <interactant intactId="EBI-948001">
        <id>Q15323</id>
    </interactant>
    <interactant intactId="EBI-398610">
        <id>O60573</id>
        <label>EIF4E2</label>
    </interactant>
    <organismsDiffer>false</organismsDiffer>
    <experiments>3</experiments>
</comment>
<comment type="interaction">
    <interactant intactId="EBI-948001">
        <id>Q15323</id>
    </interactant>
    <interactant intactId="EBI-12012124">
        <id>Q04637-9</id>
        <label>EIF4G1</label>
    </interactant>
    <organismsDiffer>false</organismsDiffer>
    <experiments>3</experiments>
</comment>
<comment type="interaction">
    <interactant intactId="EBI-948001">
        <id>Q15323</id>
    </interactant>
    <interactant intactId="EBI-744099">
        <id>Q9H0I2</id>
        <label>ENKD1</label>
    </interactant>
    <organismsDiffer>false</organismsDiffer>
    <experiments>3</experiments>
</comment>
<comment type="interaction">
    <interactant intactId="EBI-948001">
        <id>Q15323</id>
    </interactant>
    <interactant intactId="EBI-946972">
        <id>Q9UM22</id>
        <label>EPDR1</label>
    </interactant>
    <organismsDiffer>false</organismsDiffer>
    <experiments>3</experiments>
</comment>
<comment type="interaction">
    <interactant intactId="EBI-948001">
        <id>Q15323</id>
    </interactant>
    <interactant intactId="EBI-742102">
        <id>Q8IYI6</id>
        <label>EXOC8</label>
    </interactant>
    <organismsDiffer>false</organismsDiffer>
    <experiments>3</experiments>
</comment>
<comment type="interaction">
    <interactant intactId="EBI-948001">
        <id>Q15323</id>
    </interactant>
    <interactant intactId="EBI-371876">
        <id>Q9NQT4</id>
        <label>EXOSC5</label>
    </interactant>
    <organismsDiffer>false</organismsDiffer>
    <experiments>3</experiments>
</comment>
<comment type="interaction">
    <interactant intactId="EBI-948001">
        <id>Q15323</id>
    </interactant>
    <interactant intactId="EBI-12057609">
        <id>O95864-3</id>
        <label>FADS2</label>
    </interactant>
    <organismsDiffer>false</organismsDiffer>
    <experiments>3</experiments>
</comment>
<comment type="interaction">
    <interactant intactId="EBI-948001">
        <id>Q15323</id>
    </interactant>
    <interactant intactId="EBI-1752811">
        <id>Q9BQ89</id>
        <label>FAM110A</label>
    </interactant>
    <organismsDiffer>false</organismsDiffer>
    <experiments>6</experiments>
</comment>
<comment type="interaction">
    <interactant intactId="EBI-948001">
        <id>Q15323</id>
    </interactant>
    <interactant intactId="EBI-741626">
        <id>Q9H5Z6</id>
        <label>FAM124B</label>
    </interactant>
    <organismsDiffer>false</organismsDiffer>
    <experiments>3</experiments>
</comment>
<comment type="interaction">
    <interactant intactId="EBI-948001">
        <id>Q15323</id>
    </interactant>
    <interactant intactId="EBI-11986315">
        <id>Q9H5Z6-2</id>
        <label>FAM124B</label>
    </interactant>
    <organismsDiffer>false</organismsDiffer>
    <experiments>3</experiments>
</comment>
<comment type="interaction">
    <interactant intactId="EBI-948001">
        <id>Q15323</id>
    </interactant>
    <interactant intactId="EBI-742802">
        <id>Q9Y247</id>
        <label>FAM50B</label>
    </interactant>
    <organismsDiffer>false</organismsDiffer>
    <experiments>3</experiments>
</comment>
<comment type="interaction">
    <interactant intactId="EBI-948001">
        <id>Q15323</id>
    </interactant>
    <interactant intactId="EBI-6658203">
        <id>Q86YD7</id>
        <label>FAM90A1</label>
    </interactant>
    <organismsDiffer>false</organismsDiffer>
    <experiments>6</experiments>
</comment>
<comment type="interaction">
    <interactant intactId="EBI-948001">
        <id>Q15323</id>
    </interactant>
    <interactant intactId="EBI-2513774">
        <id>O95363</id>
        <label>FARS2</label>
    </interactant>
    <organismsDiffer>false</organismsDiffer>
    <experiments>3</experiments>
</comment>
<comment type="interaction">
    <interactant intactId="EBI-948001">
        <id>Q15323</id>
    </interactant>
    <interactant intactId="EBI-10244131">
        <id>Q8TES7-6</id>
        <label>FBF1</label>
    </interactant>
    <organismsDiffer>false</organismsDiffer>
    <experiments>3</experiments>
</comment>
<comment type="interaction">
    <interactant intactId="EBI-948001">
        <id>Q15323</id>
    </interactant>
    <interactant intactId="EBI-741068">
        <id>Q969U6</id>
        <label>FBXW5</label>
    </interactant>
    <organismsDiffer>false</organismsDiffer>
    <experiments>6</experiments>
</comment>
<comment type="interaction">
    <interactant intactId="EBI-948001">
        <id>Q15323</id>
    </interactant>
    <interactant intactId="EBI-11479104">
        <id>O43320</id>
        <label>FGF16</label>
    </interactant>
    <organismsDiffer>false</organismsDiffer>
    <experiments>3</experiments>
</comment>
<comment type="interaction">
    <interactant intactId="EBI-948001">
        <id>Q15323</id>
    </interactant>
    <interactant intactId="EBI-6693977">
        <id>P68106</id>
        <label>FKBP1B</label>
    </interactant>
    <organismsDiffer>false</organismsDiffer>
    <experiments>3</experiments>
</comment>
<comment type="interaction">
    <interactant intactId="EBI-948001">
        <id>Q15323</id>
    </interactant>
    <interactant intactId="EBI-11998976">
        <id>P68106-2</id>
        <label>FKBP1B</label>
    </interactant>
    <organismsDiffer>false</organismsDiffer>
    <experiments>3</experiments>
</comment>
<comment type="interaction">
    <interactant intactId="EBI-948001">
        <id>Q15323</id>
    </interactant>
    <interactant intactId="EBI-3916225">
        <id>Q99853</id>
        <label>FOXB1</label>
    </interactant>
    <organismsDiffer>false</organismsDiffer>
    <experiments>3</experiments>
</comment>
<comment type="interaction">
    <interactant intactId="EBI-948001">
        <id>Q15323</id>
    </interactant>
    <interactant intactId="EBI-725515">
        <id>O43559</id>
        <label>FRS3</label>
    </interactant>
    <organismsDiffer>false</organismsDiffer>
    <experiments>3</experiments>
</comment>
<comment type="interaction">
    <interactant intactId="EBI-948001">
        <id>Q15323</id>
    </interactant>
    <interactant intactId="EBI-16430771">
        <id>A0A0S2Z4D9</id>
        <label>GAD1</label>
    </interactant>
    <organismsDiffer>false</organismsDiffer>
    <experiments>3</experiments>
</comment>
<comment type="interaction">
    <interactant intactId="EBI-948001">
        <id>Q15323</id>
    </interactant>
    <interactant intactId="EBI-372506">
        <id>Q8TAE8</id>
        <label>GADD45GIP1</label>
    </interactant>
    <organismsDiffer>false</organismsDiffer>
    <experiments>3</experiments>
</comment>
<comment type="interaction">
    <interactant intactId="EBI-948001">
        <id>Q15323</id>
    </interactant>
    <interactant intactId="EBI-752049">
        <id>Q8NEG0</id>
        <label>GARIN6</label>
    </interactant>
    <organismsDiffer>false</organismsDiffer>
    <experiments>6</experiments>
</comment>
<comment type="interaction">
    <interactant intactId="EBI-948001">
        <id>Q15323</id>
    </interactant>
    <interactant intactId="EBI-744104">
        <id>P55040</id>
        <label>GEM</label>
    </interactant>
    <organismsDiffer>false</organismsDiffer>
    <experiments>6</experiments>
</comment>
<comment type="interaction">
    <interactant intactId="EBI-948001">
        <id>Q15323</id>
    </interactant>
    <interactant intactId="EBI-744302">
        <id>P14136</id>
        <label>GFAP</label>
    </interactant>
    <organismsDiffer>false</organismsDiffer>
    <experiments>3</experiments>
</comment>
<comment type="interaction">
    <interactant intactId="EBI-948001">
        <id>Q15323</id>
    </interactant>
    <interactant intactId="EBI-8799578">
        <id>Q9NXC2</id>
        <label>GFOD1</label>
    </interactant>
    <organismsDiffer>false</organismsDiffer>
    <experiments>3</experiments>
</comment>
<comment type="interaction">
    <interactant intactId="EBI-948001">
        <id>Q15323</id>
    </interactant>
    <interactant intactId="EBI-374781">
        <id>O76003</id>
        <label>GLRX3</label>
    </interactant>
    <organismsDiffer>false</organismsDiffer>
    <experiments>3</experiments>
</comment>
<comment type="interaction">
    <interactant intactId="EBI-948001">
        <id>Q15323</id>
    </interactant>
    <interactant intactId="EBI-353997">
        <id>P04899</id>
        <label>GNAI2</label>
    </interactant>
    <organismsDiffer>false</organismsDiffer>
    <experiments>3</experiments>
</comment>
<comment type="interaction">
    <interactant intactId="EBI-948001">
        <id>Q15323</id>
    </interactant>
    <interactant intactId="EBI-4291090">
        <id>Q9Y223</id>
        <label>GNE</label>
    </interactant>
    <organismsDiffer>false</organismsDiffer>
    <experiments>3</experiments>
</comment>
<comment type="interaction">
    <interactant intactId="EBI-948001">
        <id>Q15323</id>
    </interactant>
    <interactant intactId="EBI-11975289">
        <id>Q9Y223-2</id>
        <label>GNE</label>
    </interactant>
    <organismsDiffer>false</organismsDiffer>
    <experiments>3</experiments>
</comment>
<comment type="interaction">
    <interactant intactId="EBI-948001">
        <id>Q15323</id>
    </interactant>
    <interactant intactId="EBI-10211741">
        <id>P50151</id>
        <label>GNG10</label>
    </interactant>
    <organismsDiffer>false</organismsDiffer>
    <experiments>3</experiments>
</comment>
<comment type="interaction">
    <interactant intactId="EBI-948001">
        <id>Q15323</id>
    </interactant>
    <interactant intactId="EBI-10220734">
        <id>P63218</id>
        <label>GNG5</label>
    </interactant>
    <organismsDiffer>false</organismsDiffer>
    <experiments>3</experiments>
</comment>
<comment type="interaction">
    <interactant intactId="EBI-948001">
        <id>Q15323</id>
    </interactant>
    <interactant intactId="EBI-10268729">
        <id>Q8N9W4-2</id>
        <label>GOLGA6L2</label>
    </interactant>
    <organismsDiffer>false</organismsDiffer>
    <experiments>3</experiments>
</comment>
<comment type="interaction">
    <interactant intactId="EBI-948001">
        <id>Q15323</id>
    </interactant>
    <interactant intactId="EBI-713355">
        <id>Q13227</id>
        <label>GPS2</label>
    </interactant>
    <organismsDiffer>false</organismsDiffer>
    <experiments>7</experiments>
</comment>
<comment type="interaction">
    <interactant intactId="EBI-948001">
        <id>Q15323</id>
    </interactant>
    <interactant intactId="EBI-353467">
        <id>P09211</id>
        <label>GSTP1</label>
    </interactant>
    <organismsDiffer>false</organismsDiffer>
    <experiments>6</experiments>
</comment>
<comment type="interaction">
    <interactant intactId="EBI-948001">
        <id>Q15323</id>
    </interactant>
    <interactant intactId="EBI-11956675">
        <id>Q9GZV7</id>
        <label>HAPLN2</label>
    </interactant>
    <organismsDiffer>false</organismsDiffer>
    <experiments>3</experiments>
</comment>
<comment type="interaction">
    <interactant intactId="EBI-948001">
        <id>Q15323</id>
    </interactant>
    <interactant intactId="EBI-2514791">
        <id>Q96CS2</id>
        <label>HAUS1</label>
    </interactant>
    <organismsDiffer>false</organismsDiffer>
    <experiments>3</experiments>
</comment>
<comment type="interaction">
    <interactant intactId="EBI-948001">
        <id>Q15323</id>
    </interactant>
    <interactant intactId="EBI-714680">
        <id>P69905</id>
        <label>HBA2</label>
    </interactant>
    <organismsDiffer>false</organismsDiffer>
    <experiments>3</experiments>
</comment>
<comment type="interaction">
    <interactant intactId="EBI-948001">
        <id>Q15323</id>
    </interactant>
    <interactant intactId="EBI-719843">
        <id>P02008</id>
        <label>HBZ</label>
    </interactant>
    <organismsDiffer>false</organismsDiffer>
    <experiments>3</experiments>
</comment>
<comment type="interaction">
    <interactant intactId="EBI-948001">
        <id>Q15323</id>
    </interactant>
    <interactant intactId="EBI-9834454">
        <id>P08631-2</id>
        <label>HCK</label>
    </interactant>
    <organismsDiffer>false</organismsDiffer>
    <experiments>3</experiments>
</comment>
<comment type="interaction">
    <interactant intactId="EBI-948001">
        <id>Q15323</id>
    </interactant>
    <interactant intactId="EBI-308629">
        <id>P56524</id>
        <label>HDAC4</label>
    </interactant>
    <organismsDiffer>false</organismsDiffer>
    <experiments>3</experiments>
</comment>
<comment type="interaction">
    <interactant intactId="EBI-948001">
        <id>Q15323</id>
    </interactant>
    <interactant intactId="EBI-11953488">
        <id>P56524-2</id>
        <label>HDAC4</label>
    </interactant>
    <organismsDiffer>false</organismsDiffer>
    <experiments>3</experiments>
</comment>
<comment type="interaction">
    <interactant intactId="EBI-948001">
        <id>Q15323</id>
    </interactant>
    <interactant intactId="EBI-740220">
        <id>O14964</id>
        <label>HGS</label>
    </interactant>
    <organismsDiffer>false</organismsDiffer>
    <experiments>7</experiments>
</comment>
<comment type="interaction">
    <interactant intactId="EBI-948001">
        <id>Q15323</id>
    </interactant>
    <interactant intactId="EBI-740785">
        <id>P49639</id>
        <label>HOXA1</label>
    </interactant>
    <organismsDiffer>false</organismsDiffer>
    <experiments>7</experiments>
</comment>
<comment type="interaction">
    <interactant intactId="EBI-948001">
        <id>Q15323</id>
    </interactant>
    <interactant intactId="EBI-3893317">
        <id>P09067</id>
        <label>HOXB5</label>
    </interactant>
    <organismsDiffer>false</organismsDiffer>
    <experiments>3</experiments>
</comment>
<comment type="interaction">
    <interactant intactId="EBI-948001">
        <id>Q15323</id>
    </interactant>
    <interactant intactId="EBI-12294537">
        <id>O60243</id>
        <label>HS6ST1</label>
    </interactant>
    <organismsDiffer>false</organismsDiffer>
    <experiments>3</experiments>
</comment>
<comment type="interaction">
    <interactant intactId="EBI-948001">
        <id>Q15323</id>
    </interactant>
    <interactant intactId="EBI-3918847">
        <id>Q9H2F3</id>
        <label>HSD3B7</label>
    </interactant>
    <organismsDiffer>false</organismsDiffer>
    <experiments>3</experiments>
</comment>
<comment type="interaction">
    <interactant intactId="EBI-948001">
        <id>Q15323</id>
    </interactant>
    <interactant intactId="EBI-12056251">
        <id>Q9ULV5-2</id>
        <label>HSF4</label>
    </interactant>
    <organismsDiffer>false</organismsDiffer>
    <experiments>3</experiments>
</comment>
<comment type="interaction">
    <interactant intactId="EBI-948001">
        <id>Q15323</id>
    </interactant>
    <interactant intactId="EBI-10291310">
        <id>Q96MM6</id>
        <label>HSPA12B</label>
    </interactant>
    <organismsDiffer>false</organismsDiffer>
    <experiments>6</experiments>
</comment>
<comment type="interaction">
    <interactant intactId="EBI-948001">
        <id>Q15323</id>
    </interactant>
    <interactant intactId="EBI-352528">
        <id>P10809</id>
        <label>HSPD1</label>
    </interactant>
    <organismsDiffer>false</organismsDiffer>
    <experiments>3</experiments>
</comment>
<comment type="interaction">
    <interactant intactId="EBI-948001">
        <id>Q15323</id>
    </interactant>
    <interactant intactId="EBI-2806068">
        <id>Q12891</id>
        <label>HYAL2</label>
    </interactant>
    <organismsDiffer>false</organismsDiffer>
    <experiments>3</experiments>
</comment>
<comment type="interaction">
    <interactant intactId="EBI-948001">
        <id>Q15323</id>
    </interactant>
    <interactant intactId="EBI-10233928">
        <id>Q14773-3</id>
        <label>ICAM4</label>
    </interactant>
    <organismsDiffer>false</organismsDiffer>
    <experiments>6</experiments>
</comment>
<comment type="interaction">
    <interactant intactId="EBI-948001">
        <id>Q15323</id>
    </interactant>
    <interactant intactId="EBI-17178971">
        <id>Q14005-2</id>
        <label>IL16</label>
    </interactant>
    <organismsDiffer>false</organismsDiffer>
    <experiments>3</experiments>
</comment>
<comment type="interaction">
    <interactant intactId="EBI-948001">
        <id>Q15323</id>
    </interactant>
    <interactant intactId="EBI-1380477">
        <id>Q92835</id>
        <label>INPP5D</label>
    </interactant>
    <organismsDiffer>false</organismsDiffer>
    <experiments>3</experiments>
</comment>
<comment type="interaction">
    <interactant intactId="EBI-948001">
        <id>Q15323</id>
    </interactant>
    <interactant intactId="EBI-749162">
        <id>Q9BT40</id>
        <label>INPP5K</label>
    </interactant>
    <organismsDiffer>false</organismsDiffer>
    <experiments>7</experiments>
</comment>
<comment type="interaction">
    <interactant intactId="EBI-948001">
        <id>Q15323</id>
    </interactant>
    <interactant intactId="EBI-475899">
        <id>P06213</id>
        <label>INSR</label>
    </interactant>
    <organismsDiffer>false</organismsDiffer>
    <experiments>3</experiments>
</comment>
<comment type="interaction">
    <interactant intactId="EBI-948001">
        <id>Q15323</id>
    </interactant>
    <interactant intactId="EBI-300173">
        <id>P05107</id>
        <label>ITGB2</label>
    </interactant>
    <organismsDiffer>false</organismsDiffer>
    <experiments>3</experiments>
</comment>
<comment type="interaction">
    <interactant intactId="EBI-948001">
        <id>Q15323</id>
    </interactant>
    <interactant intactId="EBI-11051601">
        <id>P16144-2</id>
        <label>ITGB4</label>
    </interactant>
    <organismsDiffer>false</organismsDiffer>
    <experiments>3</experiments>
</comment>
<comment type="interaction">
    <interactant intactId="EBI-948001">
        <id>Q15323</id>
    </interactant>
    <interactant intactId="EBI-1223434">
        <id>P18084</id>
        <label>ITGB5</label>
    </interactant>
    <organismsDiffer>false</organismsDiffer>
    <experiments>3</experiments>
</comment>
<comment type="interaction">
    <interactant intactId="EBI-948001">
        <id>Q15323</id>
    </interactant>
    <interactant intactId="EBI-2510602">
        <id>Q15040</id>
        <label>JOSD1</label>
    </interactant>
    <organismsDiffer>false</organismsDiffer>
    <experiments>3</experiments>
</comment>
<comment type="interaction">
    <interactant intactId="EBI-948001">
        <id>Q15323</id>
    </interactant>
    <interactant intactId="EBI-4397613">
        <id>Q7L273</id>
        <label>KCTD9</label>
    </interactant>
    <organismsDiffer>false</organismsDiffer>
    <experiments>3</experiments>
</comment>
<comment type="interaction">
    <interactant intactId="EBI-948001">
        <id>Q15323</id>
    </interactant>
    <interactant intactId="EBI-710124">
        <id>O60341</id>
        <label>KDM1A</label>
    </interactant>
    <organismsDiffer>false</organismsDiffer>
    <experiments>3</experiments>
</comment>
<comment type="interaction">
    <interactant intactId="EBI-948001">
        <id>Q15323</id>
    </interactant>
    <interactant intactId="EBI-10188326">
        <id>Q5T5P2-6</id>
        <label>KIAA1217</label>
    </interactant>
    <organismsDiffer>false</organismsDiffer>
    <experiments>3</experiments>
</comment>
<comment type="interaction">
    <interactant intactId="EBI-948001">
        <id>Q15323</id>
    </interactant>
    <interactant intactId="EBI-2125614">
        <id>Q9BVG8</id>
        <label>KIFC3</label>
    </interactant>
    <organismsDiffer>false</organismsDiffer>
    <experiments>3</experiments>
</comment>
<comment type="interaction">
    <interactant intactId="EBI-948001">
        <id>Q15323</id>
    </interactant>
    <interactant intactId="EBI-14069005">
        <id>Q9BVG8-5</id>
        <label>KIFC3</label>
    </interactant>
    <organismsDiffer>false</organismsDiffer>
    <experiments>3</experiments>
</comment>
<comment type="interaction">
    <interactant intactId="EBI-948001">
        <id>Q15323</id>
    </interactant>
    <interactant intactId="EBI-721019">
        <id>Q07866</id>
        <label>KLC1</label>
    </interactant>
    <organismsDiffer>false</organismsDiffer>
    <experiments>3</experiments>
</comment>
<comment type="interaction">
    <interactant intactId="EBI-948001">
        <id>Q15323</id>
    </interactant>
    <interactant intactId="EBI-949319">
        <id>Q9NSK0</id>
        <label>KLC4</label>
    </interactant>
    <organismsDiffer>false</organismsDiffer>
    <experiments>7</experiments>
</comment>
<comment type="interaction">
    <interactant intactId="EBI-948001">
        <id>Q15323</id>
    </interactant>
    <interactant intactId="EBI-6426443">
        <id>Q2WGJ6</id>
        <label>KLHL38</label>
    </interactant>
    <organismsDiffer>false</organismsDiffer>
    <experiments>6</experiments>
</comment>
<comment type="interaction">
    <interactant intactId="EBI-948001">
        <id>Q15323</id>
    </interactant>
    <interactant intactId="EBI-3915857">
        <id>O60259</id>
        <label>KLK8</label>
    </interactant>
    <organismsDiffer>false</organismsDiffer>
    <experiments>3</experiments>
</comment>
<comment type="interaction">
    <interactant intactId="EBI-948001">
        <id>Q15323</id>
    </interactant>
    <interactant intactId="EBI-298429">
        <id>P04264</id>
        <label>KRT1</label>
    </interactant>
    <organismsDiffer>false</organismsDiffer>
    <experiments>3</experiments>
</comment>
<comment type="interaction">
    <interactant intactId="EBI-948001">
        <id>Q15323</id>
    </interactant>
    <interactant intactId="EBI-1247312">
        <id>P35908</id>
        <label>KRT2</label>
    </interactant>
    <organismsDiffer>false</organismsDiffer>
    <experiments>10</experiments>
</comment>
<comment type="interaction">
    <interactant intactId="EBI-948001">
        <id>Q15323</id>
    </interactant>
    <interactant intactId="EBI-742094">
        <id>P35900</id>
        <label>KRT20</label>
    </interactant>
    <organismsDiffer>false</organismsDiffer>
    <experiments>3</experiments>
</comment>
<comment type="interaction">
    <interactant intactId="EBI-948001">
        <id>Q15323</id>
    </interactant>
    <interactant intactId="EBI-2430095">
        <id>P12035</id>
        <label>KRT3</label>
    </interactant>
    <organismsDiffer>false</organismsDiffer>
    <experiments>3</experiments>
</comment>
<comment type="interaction">
    <interactant intactId="EBI-948001">
        <id>Q15323</id>
    </interactant>
    <interactant intactId="EBI-2371606">
        <id>P19013</id>
        <label>KRT4</label>
    </interactant>
    <organismsDiffer>false</organismsDiffer>
    <experiments>3</experiments>
</comment>
<comment type="interaction">
    <interactant intactId="EBI-948001">
        <id>Q15323</id>
    </interactant>
    <interactant intactId="EBI-702187">
        <id>P13647</id>
        <label>KRT5</label>
    </interactant>
    <organismsDiffer>false</organismsDiffer>
    <experiments>6</experiments>
</comment>
<comment type="interaction">
    <interactant intactId="EBI-948001">
        <id>Q15323</id>
    </interactant>
    <interactant intactId="EBI-702198">
        <id>P02538</id>
        <label>KRT6A</label>
    </interactant>
    <organismsDiffer>false</organismsDiffer>
    <experiments>12</experiments>
</comment>
<comment type="interaction">
    <interactant intactId="EBI-948001">
        <id>Q15323</id>
    </interactant>
    <interactant intactId="EBI-740907">
        <id>P04259</id>
        <label>KRT6B</label>
    </interactant>
    <organismsDiffer>false</organismsDiffer>
    <experiments>6</experiments>
</comment>
<comment type="interaction">
    <interactant intactId="EBI-948001">
        <id>Q15323</id>
    </interactant>
    <interactant intactId="EBI-2564105">
        <id>P48668</id>
        <label>KRT6C</label>
    </interactant>
    <organismsDiffer>false</organismsDiffer>
    <experiments>6</experiments>
</comment>
<comment type="interaction">
    <interactant intactId="EBI-948001">
        <id>Q15323</id>
    </interactant>
    <interactant intactId="EBI-2952676">
        <id>Q3SY84</id>
        <label>KRT71</label>
    </interactant>
    <organismsDiffer>false</organismsDiffer>
    <experiments>6</experiments>
</comment>
<comment type="interaction">
    <interactant intactId="EBI-948001">
        <id>Q15323</id>
    </interactant>
    <interactant intactId="EBI-1221280">
        <id>Q14CN4</id>
        <label>KRT72</label>
    </interactant>
    <organismsDiffer>false</organismsDiffer>
    <experiments>3</experiments>
</comment>
<comment type="interaction">
    <interactant intactId="EBI-948001">
        <id>Q15323</id>
    </interactant>
    <interactant intactId="EBI-12039441">
        <id>Q86Y46-2</id>
        <label>KRT73</label>
    </interactant>
    <organismsDiffer>false</organismsDiffer>
    <experiments>3</experiments>
</comment>
<comment type="interaction">
    <interactant intactId="EBI-948001">
        <id>Q15323</id>
    </interactant>
    <interactant intactId="EBI-968660">
        <id>Q7RTS7</id>
        <label>KRT74</label>
    </interactant>
    <organismsDiffer>false</organismsDiffer>
    <experiments>3</experiments>
</comment>
<comment type="interaction">
    <interactant intactId="EBI-948001">
        <id>Q15323</id>
    </interactant>
    <interactant intactId="EBI-2949715">
        <id>O95678</id>
        <label>KRT75</label>
    </interactant>
    <organismsDiffer>false</organismsDiffer>
    <experiments>3</experiments>
</comment>
<comment type="interaction">
    <interactant intactId="EBI-948001">
        <id>Q15323</id>
    </interactant>
    <interactant intactId="EBI-2952745">
        <id>Q01546</id>
        <label>KRT76</label>
    </interactant>
    <organismsDiffer>false</organismsDiffer>
    <experiments>5</experiments>
</comment>
<comment type="interaction">
    <interactant intactId="EBI-948001">
        <id>Q15323</id>
    </interactant>
    <interactant intactId="EBI-2511085">
        <id>Q0IIN1</id>
        <label>KRT77</label>
    </interactant>
    <organismsDiffer>false</organismsDiffer>
    <experiments>3</experiments>
</comment>
<comment type="interaction">
    <interactant intactId="EBI-948001">
        <id>Q15323</id>
    </interactant>
    <interactant intactId="EBI-3045529">
        <id>Q7Z794</id>
        <label>KRT77</label>
    </interactant>
    <organismsDiffer>false</organismsDiffer>
    <experiments>3</experiments>
</comment>
<comment type="interaction">
    <interactant intactId="EBI-948001">
        <id>Q15323</id>
    </interactant>
    <interactant intactId="EBI-1056564">
        <id>Q8N1N4</id>
        <label>KRT78</label>
    </interactant>
    <organismsDiffer>false</organismsDiffer>
    <experiments>3</experiments>
</comment>
<comment type="interaction">
    <interactant intactId="EBI-948001">
        <id>Q15323</id>
    </interactant>
    <interactant intactId="EBI-2514135">
        <id>Q5XKE5</id>
        <label>KRT79</label>
    </interactant>
    <organismsDiffer>false</organismsDiffer>
    <experiments>6</experiments>
</comment>
<comment type="interaction">
    <interactant intactId="EBI-948001">
        <id>Q15323</id>
    </interactant>
    <interactant intactId="EBI-297852">
        <id>P05787</id>
        <label>KRT8</label>
    </interactant>
    <organismsDiffer>false</organismsDiffer>
    <experiments>6</experiments>
</comment>
<comment type="interaction">
    <interactant intactId="EBI-948001">
        <id>Q15323</id>
    </interactant>
    <interactant intactId="EBI-11999246">
        <id>Q6KB66-2</id>
        <label>KRT80</label>
    </interactant>
    <organismsDiffer>false</organismsDiffer>
    <experiments>3</experiments>
</comment>
<comment type="interaction">
    <interactant intactId="EBI-948001">
        <id>Q15323</id>
    </interactant>
    <interactant intactId="EBI-739648">
        <id>Q14533</id>
        <label>KRT81</label>
    </interactant>
    <organismsDiffer>false</organismsDiffer>
    <experiments>8</experiments>
</comment>
<comment type="interaction">
    <interactant intactId="EBI-948001">
        <id>Q15323</id>
    </interactant>
    <interactant intactId="EBI-1045341">
        <id>Q9NSB4</id>
        <label>KRT82</label>
    </interactant>
    <organismsDiffer>false</organismsDiffer>
    <experiments>3</experiments>
</comment>
<comment type="interaction">
    <interactant intactId="EBI-948001">
        <id>Q15323</id>
    </interactant>
    <interactant intactId="EBI-10221390">
        <id>P78385</id>
        <label>KRT83</label>
    </interactant>
    <organismsDiffer>false</organismsDiffer>
    <experiments>6</experiments>
</comment>
<comment type="interaction">
    <interactant intactId="EBI-948001">
        <id>Q15323</id>
    </interactant>
    <interactant intactId="EBI-1049371">
        <id>P78386</id>
        <label>KRT85</label>
    </interactant>
    <organismsDiffer>false</organismsDiffer>
    <experiments>3</experiments>
</comment>
<comment type="interaction">
    <interactant intactId="EBI-948001">
        <id>Q15323</id>
    </interactant>
    <interactant intactId="EBI-9996498">
        <id>O43790</id>
        <label>KRT86</label>
    </interactant>
    <organismsDiffer>false</organismsDiffer>
    <experiments>3</experiments>
</comment>
<comment type="interaction">
    <interactant intactId="EBI-948001">
        <id>Q15323</id>
    </interactant>
    <interactant intactId="EBI-739863">
        <id>Q9BQ66</id>
        <label>KRTAP4-12</label>
    </interactant>
    <organismsDiffer>false</organismsDiffer>
    <experiments>3</experiments>
</comment>
<comment type="interaction">
    <interactant intactId="EBI-948001">
        <id>Q15323</id>
    </interactant>
    <interactant intactId="EBI-10250562">
        <id>Q6L8G9</id>
        <label>KRTAP5-6</label>
    </interactant>
    <organismsDiffer>false</organismsDiffer>
    <experiments>3</experiments>
</comment>
<comment type="interaction">
    <interactant intactId="EBI-948001">
        <id>Q15323</id>
    </interactant>
    <interactant intactId="EBI-1044640">
        <id>Q9BYQ4</id>
        <label>KRTAP9-2</label>
    </interactant>
    <organismsDiffer>false</organismsDiffer>
    <experiments>3</experiments>
</comment>
<comment type="interaction">
    <interactant intactId="EBI-948001">
        <id>Q15323</id>
    </interactant>
    <interactant intactId="EBI-1043191">
        <id>Q9BYQ3</id>
        <label>KRTAP9-3</label>
    </interactant>
    <organismsDiffer>false</organismsDiffer>
    <experiments>3</experiments>
</comment>
<comment type="interaction">
    <interactant intactId="EBI-948001">
        <id>Q15323</id>
    </interactant>
    <interactant intactId="EBI-10253976">
        <id>Q6PJG3</id>
        <label>LATS1</label>
    </interactant>
    <organismsDiffer>false</organismsDiffer>
    <experiments>3</experiments>
</comment>
<comment type="interaction">
    <interactant intactId="EBI-948001">
        <id>Q15323</id>
    </interactant>
    <interactant intactId="EBI-10245913">
        <id>Q5T7P3</id>
        <label>LCE1B</label>
    </interactant>
    <organismsDiffer>false</organismsDiffer>
    <experiments>3</experiments>
</comment>
<comment type="interaction">
    <interactant intactId="EBI-948001">
        <id>Q15323</id>
    </interactant>
    <interactant intactId="EBI-10245291">
        <id>Q5T5A8</id>
        <label>LCE3C</label>
    </interactant>
    <organismsDiffer>false</organismsDiffer>
    <experiments>3</experiments>
</comment>
<comment type="interaction">
    <interactant intactId="EBI-948001">
        <id>Q15323</id>
    </interactant>
    <interactant intactId="EBI-6658837">
        <id>Q9BYE3</id>
        <label>LCE3D</label>
    </interactant>
    <organismsDiffer>false</organismsDiffer>
    <experiments>3</experiments>
</comment>
<comment type="interaction">
    <interactant intactId="EBI-948001">
        <id>Q15323</id>
    </interactant>
    <interactant intactId="EBI-10245456">
        <id>Q5T5B0</id>
        <label>LCE3E</label>
    </interactant>
    <organismsDiffer>false</organismsDiffer>
    <experiments>3</experiments>
</comment>
<comment type="interaction">
    <interactant intactId="EBI-948001">
        <id>Q15323</id>
    </interactant>
    <interactant intactId="EBI-10246358">
        <id>Q5TA78</id>
        <label>LCE4A</label>
    </interactant>
    <organismsDiffer>false</organismsDiffer>
    <experiments>3</experiments>
</comment>
<comment type="interaction">
    <interactant intactId="EBI-948001">
        <id>Q15323</id>
    </interactant>
    <interactant intactId="EBI-726510">
        <id>Q96BZ8</id>
        <label>LENG1</label>
    </interactant>
    <organismsDiffer>false</organismsDiffer>
    <experiments>6</experiments>
</comment>
<comment type="interaction">
    <interactant intactId="EBI-948001">
        <id>Q15323</id>
    </interactant>
    <interactant intactId="EBI-1037189">
        <id>P15018</id>
        <label>LIF</label>
    </interactant>
    <organismsDiffer>false</organismsDiffer>
    <experiments>3</experiments>
</comment>
<comment type="interaction">
    <interactant intactId="EBI-948001">
        <id>Q15323</id>
    </interactant>
    <interactant intactId="EBI-748884">
        <id>Q96GY3</id>
        <label>LIN37</label>
    </interactant>
    <organismsDiffer>false</organismsDiffer>
    <experiments>3</experiments>
</comment>
<comment type="interaction">
    <interactant intactId="EBI-948001">
        <id>Q15323</id>
    </interactant>
    <interactant intactId="EBI-10286106">
        <id>Q96FQ7</id>
        <label>LINC00526</label>
    </interactant>
    <organismsDiffer>false</organismsDiffer>
    <experiments>3</experiments>
</comment>
<comment type="interaction">
    <interactant intactId="EBI-948001">
        <id>Q15323</id>
    </interactant>
    <interactant intactId="EBI-10298556">
        <id>Q9BU23</id>
        <label>LMF2</label>
    </interactant>
    <organismsDiffer>false</organismsDiffer>
    <experiments>3</experiments>
</comment>
<comment type="interaction">
    <interactant intactId="EBI-948001">
        <id>Q15323</id>
    </interactant>
    <interactant intactId="EBI-12028858">
        <id>Q8IXW0</id>
        <label>LMNTD2</label>
    </interactant>
    <organismsDiffer>false</organismsDiffer>
    <experiments>3</experiments>
</comment>
<comment type="interaction">
    <interactant intactId="EBI-948001">
        <id>Q15323</id>
    </interactant>
    <interactant intactId="EBI-11742507">
        <id>Q8TAP4-4</id>
        <label>LMO3</label>
    </interactant>
    <organismsDiffer>false</organismsDiffer>
    <experiments>3</experiments>
</comment>
<comment type="interaction">
    <interactant intactId="EBI-948001">
        <id>Q15323</id>
    </interactant>
    <interactant intactId="EBI-2798728">
        <id>P61968</id>
        <label>LMO4</label>
    </interactant>
    <organismsDiffer>false</organismsDiffer>
    <experiments>6</experiments>
</comment>
<comment type="interaction">
    <interactant intactId="EBI-948001">
        <id>Q15323</id>
    </interactant>
    <interactant intactId="EBI-2341787">
        <id>Q17RB8</id>
        <label>LONRF1</label>
    </interactant>
    <organismsDiffer>false</organismsDiffer>
    <experiments>6</experiments>
</comment>
<comment type="interaction">
    <interactant intactId="EBI-948001">
        <id>Q15323</id>
    </interactant>
    <interactant intactId="EBI-721408">
        <id>Q15345</id>
        <label>LRRC41</label>
    </interactant>
    <organismsDiffer>false</organismsDiffer>
    <experiments>3</experiments>
</comment>
<comment type="interaction">
    <interactant intactId="EBI-948001">
        <id>Q15323</id>
    </interactant>
    <interactant intactId="EBI-6659161">
        <id>Q9Y586</id>
        <label>MAB21L2</label>
    </interactant>
    <organismsDiffer>false</organismsDiffer>
    <experiments>3</experiments>
</comment>
<comment type="interaction">
    <interactant intactId="EBI-948001">
        <id>Q15323</id>
    </interactant>
    <interactant intactId="EBI-10215880">
        <id>P57077-4</id>
        <label>MAP3K7CL</label>
    </interactant>
    <organismsDiffer>false</organismsDiffer>
    <experiments>3</experiments>
</comment>
<comment type="interaction">
    <interactant intactId="EBI-948001">
        <id>Q15323</id>
    </interactant>
    <interactant intactId="EBI-947402">
        <id>O60336</id>
        <label>MAPKBP1</label>
    </interactant>
    <organismsDiffer>false</organismsDiffer>
    <experiments>6</experiments>
</comment>
<comment type="interaction">
    <interactant intactId="EBI-948001">
        <id>Q15323</id>
    </interactant>
    <interactant intactId="EBI-10250211">
        <id>Q6IPE9</id>
        <label>MARK4</label>
    </interactant>
    <organismsDiffer>false</organismsDiffer>
    <experiments>3</experiments>
</comment>
<comment type="interaction">
    <interactant intactId="EBI-948001">
        <id>Q15323</id>
    </interactant>
    <interactant intactId="EBI-302319">
        <id>Q96L34</id>
        <label>MARK4</label>
    </interactant>
    <organismsDiffer>false</organismsDiffer>
    <experiments>3</experiments>
</comment>
<comment type="interaction">
    <interactant intactId="EBI-948001">
        <id>Q15323</id>
    </interactant>
    <interactant intactId="EBI-10241963">
        <id>Q4ZG74</id>
        <label>MGC13033</label>
    </interactant>
    <organismsDiffer>false</organismsDiffer>
    <experiments>3</experiments>
</comment>
<comment type="interaction">
    <interactant intactId="EBI-948001">
        <id>Q15323</id>
    </interactant>
    <interactant intactId="EBI-14086479">
        <id>Q8IVT4</id>
        <label>MGC50722</label>
    </interactant>
    <organismsDiffer>false</organismsDiffer>
    <experiments>3</experiments>
</comment>
<comment type="interaction">
    <interactant intactId="EBI-948001">
        <id>Q15323</id>
    </interactant>
    <interactant intactId="EBI-10172526">
        <id>Q9UJV3-2</id>
        <label>MID2</label>
    </interactant>
    <organismsDiffer>false</organismsDiffer>
    <experiments>3</experiments>
</comment>
<comment type="interaction">
    <interactant intactId="EBI-948001">
        <id>Q15323</id>
    </interactant>
    <interactant intactId="EBI-1757866">
        <id>P00540</id>
        <label>MOS</label>
    </interactant>
    <organismsDiffer>false</organismsDiffer>
    <experiments>3</experiments>
</comment>
<comment type="interaction">
    <interactant intactId="EBI-948001">
        <id>Q15323</id>
    </interactant>
    <interactant intactId="EBI-1053902">
        <id>Q9NQ50</id>
        <label>MRPL40</label>
    </interactant>
    <organismsDiffer>false</organismsDiffer>
    <experiments>3</experiments>
</comment>
<comment type="interaction">
    <interactant intactId="EBI-948001">
        <id>Q15323</id>
    </interactant>
    <interactant intactId="EBI-10699187">
        <id>Q8IXL7-2</id>
        <label>MSRB3</label>
    </interactant>
    <organismsDiffer>false</organismsDiffer>
    <experiments>3</experiments>
</comment>
<comment type="interaction">
    <interactant intactId="EBI-948001">
        <id>Q15323</id>
    </interactant>
    <interactant intactId="EBI-714236">
        <id>Q13330</id>
        <label>MTA1</label>
    </interactant>
    <organismsDiffer>false</organismsDiffer>
    <experiments>3</experiments>
</comment>
<comment type="interaction">
    <interactant intactId="EBI-948001">
        <id>Q15323</id>
    </interactant>
    <interactant intactId="EBI-741574">
        <id>Q9BW11</id>
        <label>MXD3</label>
    </interactant>
    <organismsDiffer>false</organismsDiffer>
    <experiments>3</experiments>
</comment>
<comment type="interaction">
    <interactant intactId="EBI-948001">
        <id>Q15323</id>
    </interactant>
    <interactant intactId="EBI-10211940">
        <id>P50539-3</id>
        <label>MXI1</label>
    </interactant>
    <organismsDiffer>false</organismsDiffer>
    <experiments>3</experiments>
</comment>
<comment type="interaction">
    <interactant intactId="EBI-948001">
        <id>Q15323</id>
    </interactant>
    <interactant intactId="EBI-12010196">
        <id>P52179-2</id>
        <label>MYOM1</label>
    </interactant>
    <organismsDiffer>false</organismsDiffer>
    <experiments>3</experiments>
</comment>
<comment type="interaction">
    <interactant intactId="EBI-948001">
        <id>Q15323</id>
    </interactant>
    <interactant intactId="EBI-11953718">
        <id>Q8NEY1-3</id>
        <label>NAV1</label>
    </interactant>
    <organismsDiffer>false</organismsDiffer>
    <experiments>3</experiments>
</comment>
<comment type="interaction">
    <interactant intactId="EBI-948001">
        <id>Q15323</id>
    </interactant>
    <interactant intactId="EBI-10270828">
        <id>Q8NEY1-4</id>
        <label>NAV1</label>
    </interactant>
    <organismsDiffer>false</organismsDiffer>
    <experiments>3</experiments>
</comment>
<comment type="interaction">
    <interactant intactId="EBI-948001">
        <id>Q15323</id>
    </interactant>
    <interactant intactId="EBI-8650724">
        <id>Q8IW45</id>
        <label>NAXD</label>
    </interactant>
    <organismsDiffer>false</organismsDiffer>
    <experiments>3</experiments>
</comment>
<comment type="interaction">
    <interactant intactId="EBI-948001">
        <id>Q15323</id>
    </interactant>
    <interactant intactId="EBI-740364">
        <id>Q9HC98</id>
        <label>NEK6</label>
    </interactant>
    <organismsDiffer>false</organismsDiffer>
    <experiments>3</experiments>
</comment>
<comment type="interaction">
    <interactant intactId="EBI-948001">
        <id>Q15323</id>
    </interactant>
    <interactant intactId="EBI-11750983">
        <id>Q9HC98-4</id>
        <label>NEK6</label>
    </interactant>
    <organismsDiffer>false</organismsDiffer>
    <experiments>3</experiments>
</comment>
<comment type="interaction">
    <interactant intactId="EBI-948001">
        <id>Q15323</id>
    </interactant>
    <interactant intactId="EBI-12386190">
        <id>Q96S42</id>
        <label>NODAL</label>
    </interactant>
    <organismsDiffer>false</organismsDiffer>
    <experiments>3</experiments>
</comment>
<comment type="interaction">
    <interactant intactId="EBI-948001">
        <id>Q15323</id>
    </interactant>
    <interactant intactId="EBI-10210114">
        <id>P48146</id>
        <label>NPBWR2</label>
    </interactant>
    <organismsDiffer>false</organismsDiffer>
    <experiments>6</experiments>
</comment>
<comment type="interaction">
    <interactant intactId="EBI-948001">
        <id>Q15323</id>
    </interactant>
    <interactant intactId="EBI-741158">
        <id>Q96HA8</id>
        <label>NTAQ1</label>
    </interactant>
    <organismsDiffer>false</organismsDiffer>
    <experiments>3</experiments>
</comment>
<comment type="interaction">
    <interactant intactId="EBI-948001">
        <id>Q15323</id>
    </interactant>
    <interactant intactId="EBI-2949792">
        <id>Q9BRJ7</id>
        <label>NUDT16L1</label>
    </interactant>
    <organismsDiffer>false</organismsDiffer>
    <experiments>3</experiments>
</comment>
<comment type="interaction">
    <interactant intactId="EBI-948001">
        <id>Q15323</id>
    </interactant>
    <interactant intactId="EBI-1210753">
        <id>Q7Z417</id>
        <label>NUFIP2</label>
    </interactant>
    <organismsDiffer>false</organismsDiffer>
    <experiments>3</experiments>
</comment>
<comment type="interaction">
    <interactant intactId="EBI-948001">
        <id>Q15323</id>
    </interactant>
    <interactant intactId="EBI-10300896">
        <id>Q9BWI9</id>
        <label>OTUB2</label>
    </interactant>
    <organismsDiffer>false</organismsDiffer>
    <experiments>3</experiments>
</comment>
<comment type="interaction">
    <interactant intactId="EBI-948001">
        <id>Q15323</id>
    </interactant>
    <interactant intactId="EBI-740446">
        <id>P32242</id>
        <label>OTX1</label>
    </interactant>
    <organismsDiffer>false</organismsDiffer>
    <experiments>3</experiments>
</comment>
<comment type="interaction">
    <interactant intactId="EBI-948001">
        <id>Q15323</id>
    </interactant>
    <interactant intactId="EBI-1753251">
        <id>Q99572</id>
        <label>P2RX7</label>
    </interactant>
    <organismsDiffer>false</organismsDiffer>
    <experiments>6</experiments>
</comment>
<comment type="interaction">
    <interactant intactId="EBI-948001">
        <id>Q15323</id>
    </interactant>
    <interactant intactId="EBI-12149899">
        <id>Q8IVL6-2</id>
        <label>P3H3</label>
    </interactant>
    <organismsDiffer>false</organismsDiffer>
    <experiments>3</experiments>
</comment>
<comment type="interaction">
    <interactant intactId="EBI-948001">
        <id>Q15323</id>
    </interactant>
    <interactant intactId="EBI-741171">
        <id>Q96AL5</id>
        <label>PBX3</label>
    </interactant>
    <organismsDiffer>false</organismsDiffer>
    <experiments>3</experiments>
</comment>
<comment type="interaction">
    <interactant intactId="EBI-948001">
        <id>Q15323</id>
    </interactant>
    <interactant intactId="EBI-641237">
        <id>P09619</id>
        <label>PDGFRB</label>
    </interactant>
    <organismsDiffer>false</organismsDiffer>
    <experiments>3</experiments>
</comment>
<comment type="interaction">
    <interactant intactId="EBI-948001">
        <id>Q15323</id>
    </interactant>
    <interactant intactId="EBI-10310808">
        <id>Q9HCN3</id>
        <label>PGAP6</label>
    </interactant>
    <organismsDiffer>false</organismsDiffer>
    <experiments>3</experiments>
</comment>
<comment type="interaction">
    <interactant intactId="EBI-948001">
        <id>Q15323</id>
    </interactant>
    <interactant intactId="EBI-14568740">
        <id>B7ZLY0</id>
        <label>PHC2</label>
    </interactant>
    <organismsDiffer>false</organismsDiffer>
    <experiments>3</experiments>
</comment>
<comment type="interaction">
    <interactant intactId="EBI-948001">
        <id>Q15323</id>
    </interactant>
    <interactant intactId="EBI-14084211">
        <id>A2BDE7</id>
        <label>PHLDA1</label>
    </interactant>
    <organismsDiffer>false</organismsDiffer>
    <experiments>3</experiments>
</comment>
<comment type="interaction">
    <interactant intactId="EBI-948001">
        <id>Q15323</id>
    </interactant>
    <interactant intactId="EBI-714158">
        <id>Q13526</id>
        <label>PIN1</label>
    </interactant>
    <organismsDiffer>false</organismsDiffer>
    <experiments>6</experiments>
</comment>
<comment type="interaction">
    <interactant intactId="EBI-948001">
        <id>Q15323</id>
    </interactant>
    <interactant intactId="EBI-602382">
        <id>Q16512</id>
        <label>PKN1</label>
    </interactant>
    <organismsDiffer>false</organismsDiffer>
    <experiments>6</experiments>
</comment>
<comment type="interaction">
    <interactant intactId="EBI-948001">
        <id>Q15323</id>
    </interactant>
    <interactant intactId="EBI-1384335">
        <id>Q6P5Z2</id>
        <label>PKN3</label>
    </interactant>
    <organismsDiffer>false</organismsDiffer>
    <experiments>4</experiments>
</comment>
<comment type="interaction">
    <interactant intactId="EBI-948001">
        <id>Q15323</id>
    </interactant>
    <interactant intactId="EBI-10987518">
        <id>Q99959-2</id>
        <label>PKP2</label>
    </interactant>
    <organismsDiffer>false</organismsDiffer>
    <experiments>3</experiments>
</comment>
<comment type="interaction">
    <interactant intactId="EBI-948001">
        <id>Q15323</id>
    </interactant>
    <interactant intactId="EBI-12014286">
        <id>Q494U1-3</id>
        <label>PLEKHN1</label>
    </interactant>
    <organismsDiffer>false</organismsDiffer>
    <experiments>3</experiments>
</comment>
<comment type="interaction">
    <interactant intactId="EBI-948001">
        <id>Q15323</id>
    </interactant>
    <interactant intactId="EBI-10276663">
        <id>Q8WUT1</id>
        <label>POLDIP3</label>
    </interactant>
    <organismsDiffer>false</organismsDiffer>
    <experiments>3</experiments>
</comment>
<comment type="interaction">
    <interactant intactId="EBI-948001">
        <id>Q15323</id>
    </interactant>
    <interactant intactId="EBI-17236143">
        <id>Q12837</id>
        <label>POU4F2</label>
    </interactant>
    <organismsDiffer>false</organismsDiffer>
    <experiments>3</experiments>
</comment>
<comment type="interaction">
    <interactant intactId="EBI-948001">
        <id>Q15323</id>
    </interactant>
    <interactant intactId="EBI-12033574">
        <id>Q15319</id>
        <label>POU4F3</label>
    </interactant>
    <organismsDiffer>false</organismsDiffer>
    <experiments>3</experiments>
</comment>
<comment type="interaction">
    <interactant intactId="EBI-948001">
        <id>Q15323</id>
    </interactant>
    <interactant intactId="EBI-2557469">
        <id>Q6NYC8</id>
        <label>PPP1R18</label>
    </interactant>
    <organismsDiffer>false</organismsDiffer>
    <experiments>6</experiments>
</comment>
<comment type="interaction">
    <interactant intactId="EBI-948001">
        <id>Q15323</id>
    </interactant>
    <interactant intactId="EBI-724466">
        <id>P14222</id>
        <label>PRF1</label>
    </interactant>
    <organismsDiffer>false</organismsDiffer>
    <experiments>6</experiments>
</comment>
<comment type="interaction">
    <interactant intactId="EBI-948001">
        <id>Q15323</id>
    </interactant>
    <interactant intactId="EBI-1383852">
        <id>P54646</id>
        <label>PRKAA2</label>
    </interactant>
    <organismsDiffer>false</organismsDiffer>
    <experiments>3</experiments>
</comment>
<comment type="interaction">
    <interactant intactId="EBI-948001">
        <id>Q15323</id>
    </interactant>
    <interactant intactId="EBI-1053424">
        <id>O43741</id>
        <label>PRKAB2</label>
    </interactant>
    <organismsDiffer>false</organismsDiffer>
    <experiments>3</experiments>
</comment>
<comment type="interaction">
    <interactant intactId="EBI-948001">
        <id>Q15323</id>
    </interactant>
    <interactant intactId="EBI-2798416">
        <id>Q99633</id>
        <label>PRPF18</label>
    </interactant>
    <organismsDiffer>false</organismsDiffer>
    <experiments>3</experiments>
</comment>
<comment type="interaction">
    <interactant intactId="EBI-948001">
        <id>Q15323</id>
    </interactant>
    <interactant intactId="EBI-1567797">
        <id>Q8WWY3</id>
        <label>PRPF31</label>
    </interactant>
    <organismsDiffer>false</organismsDiffer>
    <experiments>3</experiments>
</comment>
<comment type="interaction">
    <interactant intactId="EBI-948001">
        <id>Q15323</id>
    </interactant>
    <interactant intactId="EBI-752074">
        <id>P41219</id>
        <label>PRPH</label>
    </interactant>
    <organismsDiffer>false</organismsDiffer>
    <experiments>3</experiments>
</comment>
<comment type="interaction">
    <interactant intactId="EBI-948001">
        <id>Q15323</id>
    </interactant>
    <interactant intactId="EBI-10174045">
        <id>A6NJB7</id>
        <label>PRR19</label>
    </interactant>
    <organismsDiffer>false</organismsDiffer>
    <experiments>3</experiments>
</comment>
<comment type="interaction">
    <interactant intactId="EBI-948001">
        <id>Q15323</id>
    </interactant>
    <interactant intactId="EBI-11998870">
        <id>A6NJB7-2</id>
        <label>PRR19</label>
    </interactant>
    <organismsDiffer>false</organismsDiffer>
    <experiments>3</experiments>
</comment>
<comment type="interaction">
    <interactant intactId="EBI-948001">
        <id>Q15323</id>
    </interactant>
    <interactant intactId="EBI-11986293">
        <id>P0CG20</id>
        <label>PRR35</label>
    </interactant>
    <organismsDiffer>false</organismsDiffer>
    <experiments>3</experiments>
</comment>
<comment type="interaction">
    <interactant intactId="EBI-948001">
        <id>Q15323</id>
    </interactant>
    <interactant intactId="EBI-359352">
        <id>P25786</id>
        <label>PSMA1</label>
    </interactant>
    <organismsDiffer>false</organismsDiffer>
    <experiments>3</experiments>
</comment>
<comment type="interaction">
    <interactant intactId="EBI-948001">
        <id>Q15323</id>
    </interactant>
    <interactant intactId="EBI-372273">
        <id>P20618</id>
        <label>PSMB1</label>
    </interactant>
    <organismsDiffer>false</organismsDiffer>
    <experiments>3</experiments>
</comment>
<comment type="interaction">
    <interactant intactId="EBI-948001">
        <id>Q15323</id>
    </interactant>
    <interactant intactId="EBI-357745">
        <id>P62195</id>
        <label>PSMC5</label>
    </interactant>
    <organismsDiffer>false</organismsDiffer>
    <experiments>3</experiments>
</comment>
<comment type="interaction">
    <interactant intactId="EBI-948001">
        <id>Q15323</id>
    </interactant>
    <interactant intactId="EBI-723276">
        <id>Q969U7</id>
        <label>PSMG2</label>
    </interactant>
    <organismsDiffer>false</organismsDiffer>
    <experiments>6</experiments>
</comment>
<comment type="interaction">
    <interactant intactId="EBI-948001">
        <id>Q15323</id>
    </interactant>
    <interactant intactId="EBI-1392258">
        <id>Q8WXF1</id>
        <label>PSPC1</label>
    </interactant>
    <organismsDiffer>false</organismsDiffer>
    <experiments>3</experiments>
</comment>
<comment type="interaction">
    <interactant intactId="EBI-948001">
        <id>Q15323</id>
    </interactant>
    <interactant intactId="EBI-10234038">
        <id>P43115-12</id>
        <label>PTGER3</label>
    </interactant>
    <organismsDiffer>false</organismsDiffer>
    <experiments>3</experiments>
</comment>
<comment type="interaction">
    <interactant intactId="EBI-948001">
        <id>Q15323</id>
    </interactant>
    <interactant intactId="EBI-7199479">
        <id>Q8WUK0</id>
        <label>PTPMT1</label>
    </interactant>
    <organismsDiffer>false</organismsDiffer>
    <experiments>6</experiments>
</comment>
<comment type="interaction">
    <interactant intactId="EBI-948001">
        <id>Q15323</id>
    </interactant>
    <interactant intactId="EBI-948428">
        <id>Q9Y2K5</id>
        <label>R3HDM2</label>
    </interactant>
    <organismsDiffer>false</organismsDiffer>
    <experiments>3</experiments>
</comment>
<comment type="interaction">
    <interactant intactId="EBI-948001">
        <id>Q15323</id>
    </interactant>
    <interactant intactId="EBI-744685">
        <id>Q14088</id>
        <label>RAB33A</label>
    </interactant>
    <organismsDiffer>false</organismsDiffer>
    <experiments>3</experiments>
</comment>
<comment type="interaction">
    <interactant intactId="EBI-948001">
        <id>Q15323</id>
    </interactant>
    <interactant intactId="EBI-744267">
        <id>Q96JH8</id>
        <label>RADIL</label>
    </interactant>
    <organismsDiffer>false</organismsDiffer>
    <experiments>6</experiments>
</comment>
<comment type="interaction">
    <interactant intactId="EBI-948001">
        <id>Q15323</id>
    </interactant>
    <interactant intactId="EBI-744023">
        <id>Q9BTL3</id>
        <label>RAMAC</label>
    </interactant>
    <organismsDiffer>false</organismsDiffer>
    <experiments>6</experiments>
</comment>
<comment type="interaction">
    <interactant intactId="EBI-948001">
        <id>Q15323</id>
    </interactant>
    <interactant intactId="EBI-743428">
        <id>Q9P2K3</id>
        <label>RCOR3</label>
    </interactant>
    <organismsDiffer>false</organismsDiffer>
    <experiments>3</experiments>
</comment>
<comment type="interaction">
    <interactant intactId="EBI-948001">
        <id>Q15323</id>
    </interactant>
    <interactant intactId="EBI-1504830">
        <id>Q9P2K3-2</id>
        <label>RCOR3</label>
    </interactant>
    <organismsDiffer>false</organismsDiffer>
    <experiments>3</experiments>
</comment>
<comment type="interaction">
    <interactant intactId="EBI-948001">
        <id>Q15323</id>
    </interactant>
    <interactant intactId="EBI-746325">
        <id>Q8TCX5</id>
        <label>RHPN1</label>
    </interactant>
    <organismsDiffer>false</organismsDiffer>
    <experiments>3</experiments>
</comment>
<comment type="interaction">
    <interactant intactId="EBI-948001">
        <id>Q15323</id>
    </interactant>
    <interactant intactId="EBI-10265323">
        <id>Q8N443</id>
        <label>RIBC1</label>
    </interactant>
    <organismsDiffer>false</organismsDiffer>
    <experiments>6</experiments>
</comment>
<comment type="interaction">
    <interactant intactId="EBI-948001">
        <id>Q15323</id>
    </interactant>
    <interactant intactId="EBI-4479407">
        <id>Q86WX3</id>
        <label>RPS19BP1</label>
    </interactant>
    <organismsDiffer>false</organismsDiffer>
    <experiments>3</experiments>
</comment>
<comment type="interaction">
    <interactant intactId="EBI-948001">
        <id>Q15323</id>
    </interactant>
    <interactant intactId="EBI-5458784">
        <id>Q6P087</id>
        <label>RPUSD3</label>
    </interactant>
    <organismsDiffer>false</organismsDiffer>
    <experiments>3</experiments>
</comment>
<comment type="interaction">
    <interactant intactId="EBI-948001">
        <id>Q15323</id>
    </interactant>
    <interactant intactId="EBI-748350">
        <id>Q9UHP6</id>
        <label>RSPH14</label>
    </interactant>
    <organismsDiffer>false</organismsDiffer>
    <experiments>6</experiments>
</comment>
<comment type="interaction">
    <interactant intactId="EBI-948001">
        <id>Q15323</id>
    </interactant>
    <interactant intactId="EBI-10217913">
        <id>Q14D33</id>
        <label>RTP5</label>
    </interactant>
    <organismsDiffer>false</organismsDiffer>
    <experiments>3</experiments>
</comment>
<comment type="interaction">
    <interactant intactId="EBI-948001">
        <id>Q15323</id>
    </interactant>
    <interactant intactId="EBI-14067109">
        <id>Q96NU1</id>
        <label>SAMD11</label>
    </interactant>
    <organismsDiffer>false</organismsDiffer>
    <experiments>3</experiments>
</comment>
<comment type="interaction">
    <interactant intactId="EBI-948001">
        <id>Q15323</id>
    </interactant>
    <interactant intactId="EBI-12000762">
        <id>Q7Z5V6-2</id>
        <label>SAXO4</label>
    </interactant>
    <organismsDiffer>false</organismsDiffer>
    <experiments>3</experiments>
</comment>
<comment type="interaction">
    <interactant intactId="EBI-948001">
        <id>Q15323</id>
    </interactant>
    <interactant intactId="EBI-748391">
        <id>Q9BWG6</id>
        <label>SCNM1</label>
    </interactant>
    <organismsDiffer>false</organismsDiffer>
    <experiments>6</experiments>
</comment>
<comment type="interaction">
    <interactant intactId="EBI-948001">
        <id>Q15323</id>
    </interactant>
    <interactant intactId="EBI-10320311">
        <id>Q9UDX3</id>
        <label>SEC14L4</label>
    </interactant>
    <organismsDiffer>false</organismsDiffer>
    <experiments>3</experiments>
</comment>
<comment type="interaction">
    <interactant intactId="EBI-948001">
        <id>Q15323</id>
    </interactant>
    <interactant intactId="EBI-10303490">
        <id>Q9C0C4</id>
        <label>SEMA4C</label>
    </interactant>
    <organismsDiffer>false</organismsDiffer>
    <experiments>6</experiments>
</comment>
<comment type="interaction">
    <interactant intactId="EBI-948001">
        <id>Q15323</id>
    </interactant>
    <interactant intactId="EBI-10251550">
        <id>Q6NXQ0</id>
        <label>SFRS2</label>
    </interactant>
    <organismsDiffer>false</organismsDiffer>
    <experiments>3</experiments>
</comment>
<comment type="interaction">
    <interactant intactId="EBI-948001">
        <id>Q15323</id>
    </interactant>
    <interactant intactId="EBI-79084">
        <id>Q92529</id>
        <label>SHC3</label>
    </interactant>
    <organismsDiffer>false</organismsDiffer>
    <experiments>6</experiments>
</comment>
<comment type="interaction">
    <interactant intactId="EBI-948001">
        <id>Q15323</id>
    </interactant>
    <interactant intactId="EBI-11955083">
        <id>Q9NUL5-4</id>
        <label>SHFL</label>
    </interactant>
    <organismsDiffer>false</organismsDiffer>
    <experiments>3</experiments>
</comment>
<comment type="interaction">
    <interactant intactId="EBI-948001">
        <id>Q15323</id>
    </interactant>
    <interactant intactId="EBI-12037847">
        <id>Q6ZSJ9</id>
        <label>SHISA6</label>
    </interactant>
    <organismsDiffer>false</organismsDiffer>
    <experiments>3</experiments>
</comment>
<comment type="interaction">
    <interactant intactId="EBI-948001">
        <id>Q15323</id>
    </interactant>
    <interactant intactId="EBI-10223741">
        <id>Q05CH4</id>
        <label>SLC15A3</label>
    </interactant>
    <organismsDiffer>false</organismsDiffer>
    <experiments>3</experiments>
</comment>
<comment type="interaction">
    <interactant intactId="EBI-948001">
        <id>Q15323</id>
    </interactant>
    <interactant intactId="EBI-1759386">
        <id>Q9UHI7</id>
        <label>SLC23A1</label>
    </interactant>
    <organismsDiffer>false</organismsDiffer>
    <experiments>3</experiments>
</comment>
<comment type="interaction">
    <interactant intactId="EBI-948001">
        <id>Q15323</id>
    </interactant>
    <interactant intactId="EBI-11998660">
        <id>Q9UHI7-3</id>
        <label>SLC23A1</label>
    </interactant>
    <organismsDiffer>false</organismsDiffer>
    <experiments>3</experiments>
</comment>
<comment type="interaction">
    <interactant intactId="EBI-948001">
        <id>Q15323</id>
    </interactant>
    <interactant intactId="EBI-6598313">
        <id>Q86VD7</id>
        <label>SLC25A42</label>
    </interactant>
    <organismsDiffer>false</organismsDiffer>
    <experiments>3</experiments>
</comment>
<comment type="interaction">
    <interactant intactId="EBI-948001">
        <id>Q15323</id>
    </interactant>
    <interactant intactId="EBI-356254">
        <id>P12236</id>
        <label>SLC25A6</label>
    </interactant>
    <organismsDiffer>false</organismsDiffer>
    <experiments>3</experiments>
</comment>
<comment type="interaction">
    <interactant intactId="EBI-948001">
        <id>Q15323</id>
    </interactant>
    <interactant intactId="EBI-358489">
        <id>Q96GM5</id>
        <label>SMARCD1</label>
    </interactant>
    <organismsDiffer>false</organismsDiffer>
    <experiments>3</experiments>
</comment>
<comment type="interaction">
    <interactant intactId="EBI-948001">
        <id>Q15323</id>
    </interactant>
    <interactant intactId="EBI-455078">
        <id>Q969G3</id>
        <label>SMARCE1</label>
    </interactant>
    <organismsDiffer>false</organismsDiffer>
    <experiments>6</experiments>
</comment>
<comment type="interaction">
    <interactant intactId="EBI-948001">
        <id>Q15323</id>
    </interactant>
    <interactant intactId="EBI-750494">
        <id>P49901</id>
        <label>SMCP</label>
    </interactant>
    <organismsDiffer>false</organismsDiffer>
    <experiments>6</experiments>
</comment>
<comment type="interaction">
    <interactant intactId="EBI-948001">
        <id>Q15323</id>
    </interactant>
    <interactant intactId="EBI-2872322">
        <id>Q9H0W8</id>
        <label>SMG9</label>
    </interactant>
    <organismsDiffer>false</organismsDiffer>
    <experiments>6</experiments>
</comment>
<comment type="interaction">
    <interactant intactId="EBI-948001">
        <id>Q15323</id>
    </interactant>
    <interactant intactId="EBI-1045459">
        <id>O95863</id>
        <label>SNAI1</label>
    </interactant>
    <organismsDiffer>false</organismsDiffer>
    <experiments>4</experiments>
</comment>
<comment type="interaction">
    <interactant intactId="EBI-948001">
        <id>Q15323</id>
    </interactant>
    <interactant intactId="EBI-9675976">
        <id>Q9BV90</id>
        <label>SNRNP25</label>
    </interactant>
    <organismsDiffer>false</organismsDiffer>
    <experiments>3</experiments>
</comment>
<comment type="interaction">
    <interactant intactId="EBI-948001">
        <id>Q15323</id>
    </interactant>
    <interactant intactId="EBI-3916986">
        <id>Q86W54</id>
        <label>SPATA24</label>
    </interactant>
    <organismsDiffer>false</organismsDiffer>
    <experiments>3</experiments>
</comment>
<comment type="interaction">
    <interactant intactId="EBI-948001">
        <id>Q15323</id>
    </interactant>
    <interactant intactId="EBI-742688">
        <id>Q9NZD8</id>
        <label>SPG21</label>
    </interactant>
    <organismsDiffer>false</organismsDiffer>
    <experiments>3</experiments>
</comment>
<comment type="interaction">
    <interactant intactId="EBI-948001">
        <id>Q15323</id>
    </interactant>
    <interactant intactId="EBI-10298801">
        <id>Q9BUD6</id>
        <label>SPON2</label>
    </interactant>
    <organismsDiffer>false</organismsDiffer>
    <experiments>6</experiments>
</comment>
<comment type="interaction">
    <interactant intactId="EBI-948001">
        <id>Q15323</id>
    </interactant>
    <interactant intactId="EBI-2836158">
        <id>Q9H741</id>
        <label>SPRING1</label>
    </interactant>
    <organismsDiffer>false</organismsDiffer>
    <experiments>3</experiments>
</comment>
<comment type="interaction">
    <interactant intactId="EBI-948001">
        <id>Q15323</id>
    </interactant>
    <interactant intactId="EBI-3866665">
        <id>O43609</id>
        <label>SPRY1</label>
    </interactant>
    <organismsDiffer>false</organismsDiffer>
    <experiments>3</experiments>
</comment>
<comment type="interaction">
    <interactant intactId="EBI-948001">
        <id>Q15323</id>
    </interactant>
    <interactant intactId="EBI-2212028">
        <id>Q9Y2D8</id>
        <label>SSX2IP</label>
    </interactant>
    <organismsDiffer>false</organismsDiffer>
    <experiments>3</experiments>
</comment>
<comment type="interaction">
    <interactant intactId="EBI-948001">
        <id>Q15323</id>
    </interactant>
    <interactant intactId="EBI-749295">
        <id>O75716</id>
        <label>STK16</label>
    </interactant>
    <organismsDiffer>false</organismsDiffer>
    <experiments>3</experiments>
</comment>
<comment type="interaction">
    <interactant intactId="EBI-948001">
        <id>Q15323</id>
    </interactant>
    <interactant intactId="EBI-747797">
        <id>Q9BSH4</id>
        <label>TACO1</label>
    </interactant>
    <organismsDiffer>false</organismsDiffer>
    <experiments>3</experiments>
</comment>
<comment type="interaction">
    <interactant intactId="EBI-948001">
        <id>Q15323</id>
    </interactant>
    <interactant intactId="EBI-12017416">
        <id>Q9BX59</id>
        <label>TAPBPL</label>
    </interactant>
    <organismsDiffer>false</organismsDiffer>
    <experiments>3</experiments>
</comment>
<comment type="interaction">
    <interactant intactId="EBI-948001">
        <id>Q15323</id>
    </interactant>
    <interactant intactId="EBI-11955057">
        <id>Q8N8B7-2</id>
        <label>TCEANC</label>
    </interactant>
    <organismsDiffer>false</organismsDiffer>
    <experiments>3</experiments>
</comment>
<comment type="interaction">
    <interactant intactId="EBI-948001">
        <id>Q15323</id>
    </interactant>
    <interactant intactId="EBI-747736">
        <id>Q15561</id>
        <label>TEAD4</label>
    </interactant>
    <organismsDiffer>false</organismsDiffer>
    <experiments>3</experiments>
</comment>
<comment type="interaction">
    <interactant intactId="EBI-948001">
        <id>Q15323</id>
    </interactant>
    <interactant intactId="EBI-11139477">
        <id>Q96N21</id>
        <label>TEPSIN</label>
    </interactant>
    <organismsDiffer>false</organismsDiffer>
    <experiments>3</experiments>
</comment>
<comment type="interaction">
    <interactant intactId="EBI-948001">
        <id>Q15323</id>
    </interactant>
    <interactant intactId="EBI-751954">
        <id>O15482</id>
        <label>TEX28P2</label>
    </interactant>
    <organismsDiffer>false</organismsDiffer>
    <experiments>3</experiments>
</comment>
<comment type="interaction">
    <interactant intactId="EBI-948001">
        <id>Q15323</id>
    </interactant>
    <interactant intactId="EBI-11952651">
        <id>Q7Z6R9</id>
        <label>TFAP2D</label>
    </interactant>
    <organismsDiffer>false</organismsDiffer>
    <experiments>3</experiments>
</comment>
<comment type="interaction">
    <interactant intactId="EBI-948001">
        <id>Q15323</id>
    </interactant>
    <interactant intactId="EBI-741350">
        <id>Q9BT49</id>
        <label>THAP7</label>
    </interactant>
    <organismsDiffer>false</organismsDiffer>
    <experiments>6</experiments>
</comment>
<comment type="interaction">
    <interactant intactId="EBI-948001">
        <id>Q15323</id>
    </interactant>
    <interactant intactId="EBI-717810">
        <id>Q08117</id>
        <label>TLE5</label>
    </interactant>
    <organismsDiffer>false</organismsDiffer>
    <experiments>3</experiments>
</comment>
<comment type="interaction">
    <interactant intactId="EBI-948001">
        <id>Q15323</id>
    </interactant>
    <interactant intactId="EBI-2821497">
        <id>Q9BVX2</id>
        <label>TMEM106C</label>
    </interactant>
    <organismsDiffer>false</organismsDiffer>
    <experiments>6</experiments>
</comment>
<comment type="interaction">
    <interactant intactId="EBI-948001">
        <id>Q15323</id>
    </interactant>
    <interactant intactId="EBI-10276729">
        <id>Q8WUU8</id>
        <label>TMEM174</label>
    </interactant>
    <organismsDiffer>false</organismsDiffer>
    <experiments>3</experiments>
</comment>
<comment type="interaction">
    <interactant intactId="EBI-948001">
        <id>Q15323</id>
    </interactant>
    <interactant intactId="EBI-10307654">
        <id>Q9H6L2</id>
        <label>TMEM231</label>
    </interactant>
    <organismsDiffer>false</organismsDiffer>
    <experiments>3</experiments>
</comment>
<comment type="interaction">
    <interactant intactId="EBI-948001">
        <id>Q15323</id>
    </interactant>
    <interactant intactId="EBI-712598">
        <id>P62328</id>
        <label>TMSB4X</label>
    </interactant>
    <organismsDiffer>false</organismsDiffer>
    <experiments>3</experiments>
</comment>
<comment type="interaction">
    <interactant intactId="EBI-948001">
        <id>Q15323</id>
    </interactant>
    <interactant intactId="EBI-10226570">
        <id>Q0P5Q0</id>
        <label>TMSB4X</label>
    </interactant>
    <organismsDiffer>false</organismsDiffer>
    <experiments>3</experiments>
</comment>
<comment type="interaction">
    <interactant intactId="EBI-948001">
        <id>Q15323</id>
    </interactant>
    <interactant intactId="EBI-3650647">
        <id>Q9BUZ4</id>
        <label>TRAF4</label>
    </interactant>
    <organismsDiffer>false</organismsDiffer>
    <experiments>6</experiments>
</comment>
<comment type="interaction">
    <interactant intactId="EBI-948001">
        <id>Q15323</id>
    </interactant>
    <interactant intactId="EBI-11059915">
        <id>Q8N7C3</id>
        <label>TRIML2</label>
    </interactant>
    <organismsDiffer>false</organismsDiffer>
    <experiments>3</experiments>
</comment>
<comment type="interaction">
    <interactant intactId="EBI-948001">
        <id>Q15323</id>
    </interactant>
    <interactant intactId="EBI-2349743">
        <id>Q12815</id>
        <label>TROAP</label>
    </interactant>
    <organismsDiffer>false</organismsDiffer>
    <experiments>3</experiments>
</comment>
<comment type="interaction">
    <interactant intactId="EBI-948001">
        <id>Q15323</id>
    </interactant>
    <interactant intactId="EBI-2559824">
        <id>Q7Z6J9</id>
        <label>TSEN54</label>
    </interactant>
    <organismsDiffer>false</organismsDiffer>
    <experiments>3</experiments>
</comment>
<comment type="interaction">
    <interactant intactId="EBI-948001">
        <id>Q15323</id>
    </interactant>
    <interactant intactId="EBI-346882">
        <id>Q99816</id>
        <label>TSG101</label>
    </interactant>
    <organismsDiffer>false</organismsDiffer>
    <experiments>6</experiments>
</comment>
<comment type="interaction">
    <interactant intactId="EBI-948001">
        <id>Q15323</id>
    </interactant>
    <interactant intactId="EBI-9053916">
        <id>Q63HK5</id>
        <label>TSHZ3</label>
    </interactant>
    <organismsDiffer>false</organismsDiffer>
    <experiments>3</experiments>
</comment>
<comment type="interaction">
    <interactant intactId="EBI-948001">
        <id>Q15323</id>
    </interactant>
    <interactant intactId="EBI-21353855">
        <id>Q99598</id>
        <label>TSNAX</label>
    </interactant>
    <organismsDiffer>false</organismsDiffer>
    <experiments>3</experiments>
</comment>
<comment type="interaction">
    <interactant intactId="EBI-948001">
        <id>Q15323</id>
    </interactant>
    <interactant intactId="EBI-6447954">
        <id>Q5W5X9</id>
        <label>TTC23</label>
    </interactant>
    <organismsDiffer>false</organismsDiffer>
    <experiments>3</experiments>
</comment>
<comment type="interaction">
    <interactant intactId="EBI-948001">
        <id>Q15323</id>
    </interactant>
    <interactant intactId="EBI-9090990">
        <id>Q5W5X9-3</id>
        <label>TTC23</label>
    </interactant>
    <organismsDiffer>false</organismsDiffer>
    <experiments>3</experiments>
</comment>
<comment type="interaction">
    <interactant intactId="EBI-948001">
        <id>Q15323</id>
    </interactant>
    <interactant intactId="EBI-2851213">
        <id>Q8N5M4</id>
        <label>TTC9C</label>
    </interactant>
    <organismsDiffer>false</organismsDiffer>
    <experiments>3</experiments>
</comment>
<comment type="interaction">
    <interactant intactId="EBI-948001">
        <id>Q15323</id>
    </interactant>
    <interactant intactId="EBI-359793">
        <id>P40222</id>
        <label>TXLNA</label>
    </interactant>
    <organismsDiffer>false</organismsDiffer>
    <experiments>7</experiments>
</comment>
<comment type="interaction">
    <interactant intactId="EBI-948001">
        <id>Q15323</id>
    </interactant>
    <interactant intactId="EBI-1383454">
        <id>P29597</id>
        <label>TYK2</label>
    </interactant>
    <organismsDiffer>false</organismsDiffer>
    <experiments>3</experiments>
</comment>
<comment type="interaction">
    <interactant intactId="EBI-948001">
        <id>Q15323</id>
    </interactant>
    <interactant intactId="EBI-350510">
        <id>Q9BZF9</id>
        <label>UACA</label>
    </interactant>
    <organismsDiffer>false</organismsDiffer>
    <experiments>3</experiments>
</comment>
<comment type="interaction">
    <interactant intactId="EBI-948001">
        <id>Q15323</id>
    </interactant>
    <interactant intactId="EBI-7353612">
        <id>P57075-2</id>
        <label>UBASH3A</label>
    </interactant>
    <organismsDiffer>false</organismsDiffer>
    <experiments>3</experiments>
</comment>
<comment type="interaction">
    <interactant intactId="EBI-948001">
        <id>Q15323</id>
    </interactant>
    <interactant intactId="EBI-739895">
        <id>Q8N6Y0</id>
        <label>USHBP1</label>
    </interactant>
    <organismsDiffer>false</organismsDiffer>
    <experiments>3</experiments>
</comment>
<comment type="interaction">
    <interactant intactId="EBI-948001">
        <id>Q15323</id>
    </interactant>
    <interactant intactId="EBI-743272">
        <id>O75604</id>
        <label>USP2</label>
    </interactant>
    <organismsDiffer>false</organismsDiffer>
    <experiments>3</experiments>
</comment>
<comment type="interaction">
    <interactant intactId="EBI-948001">
        <id>Q15323</id>
    </interactant>
    <interactant intactId="EBI-5457544">
        <id>Q9BRU9</id>
        <label>UTP23</label>
    </interactant>
    <organismsDiffer>false</organismsDiffer>
    <experiments>3</experiments>
</comment>
<comment type="interaction">
    <interactant intactId="EBI-948001">
        <id>Q15323</id>
    </interactant>
    <interactant intactId="EBI-357355">
        <id>Q9UBK9</id>
        <label>UXT</label>
    </interactant>
    <organismsDiffer>false</organismsDiffer>
    <experiments>6</experiments>
</comment>
<comment type="interaction">
    <interactant intactId="EBI-948001">
        <id>Q15323</id>
    </interactant>
    <interactant intactId="EBI-10249550">
        <id>Q6EMK4</id>
        <label>VASN</label>
    </interactant>
    <organismsDiffer>false</organismsDiffer>
    <experiments>3</experiments>
</comment>
<comment type="interaction">
    <interactant intactId="EBI-948001">
        <id>Q15323</id>
    </interactant>
    <interactant intactId="EBI-9031083">
        <id>Q9Y2B5</id>
        <label>VPS9D1</label>
    </interactant>
    <organismsDiffer>false</organismsDiffer>
    <experiments>3</experiments>
</comment>
<comment type="interaction">
    <interactant intactId="EBI-948001">
        <id>Q15323</id>
    </interactant>
    <interactant intactId="EBI-744560">
        <id>Q64LD2</id>
        <label>WDR25</label>
    </interactant>
    <organismsDiffer>false</organismsDiffer>
    <experiments>3</experiments>
</comment>
<comment type="interaction">
    <interactant intactId="EBI-948001">
        <id>Q15323</id>
    </interactant>
    <interactant intactId="EBI-12032042">
        <id>Q64LD2-2</id>
        <label>WDR25</label>
    </interactant>
    <organismsDiffer>false</organismsDiffer>
    <experiments>3</experiments>
</comment>
<comment type="interaction">
    <interactant intactId="EBI-948001">
        <id>Q15323</id>
    </interactant>
    <interactant intactId="EBI-12176563">
        <id>Q9BQY6-2</id>
        <label>WFDC6</label>
    </interactant>
    <organismsDiffer>false</organismsDiffer>
    <experiments>3</experiments>
</comment>
<comment type="interaction">
    <interactant intactId="EBI-948001">
        <id>Q15323</id>
    </interactant>
    <interactant intactId="EBI-2818796">
        <id>Q8WTX9</id>
        <label>ZDHHC1</label>
    </interactant>
    <organismsDiffer>false</organismsDiffer>
    <experiments>3</experiments>
</comment>
<comment type="interaction">
    <interactant intactId="EBI-948001">
        <id>Q15323</id>
    </interactant>
    <interactant intactId="EBI-10237226">
        <id>Q15911-2</id>
        <label>ZFHX3</label>
    </interactant>
    <organismsDiffer>false</organismsDiffer>
    <experiments>3</experiments>
</comment>
<comment type="interaction">
    <interactant intactId="EBI-948001">
        <id>Q15323</id>
    </interactant>
    <interactant intactId="EBI-2849569">
        <id>Q9BQ24</id>
        <label>ZFYVE21</label>
    </interactant>
    <organismsDiffer>false</organismsDiffer>
    <experiments>3</experiments>
</comment>
<comment type="interaction">
    <interactant intactId="EBI-948001">
        <id>Q15323</id>
    </interactant>
    <interactant intactId="EBI-10183064">
        <id>Q8N5A5-2</id>
        <label>ZGPAT</label>
    </interactant>
    <organismsDiffer>false</organismsDiffer>
    <experiments>3</experiments>
</comment>
<comment type="interaction">
    <interactant intactId="EBI-948001">
        <id>Q15323</id>
    </interactant>
    <interactant intactId="EBI-11963196">
        <id>Q15915</id>
        <label>ZIC1</label>
    </interactant>
    <organismsDiffer>false</organismsDiffer>
    <experiments>3</experiments>
</comment>
<comment type="interaction">
    <interactant intactId="EBI-948001">
        <id>Q15323</id>
    </interactant>
    <interactant intactId="EBI-2555767">
        <id>Q15973</id>
        <label>ZNF124</label>
    </interactant>
    <organismsDiffer>false</organismsDiffer>
    <experiments>3</experiments>
</comment>
<comment type="interaction">
    <interactant intactId="EBI-948001">
        <id>Q15323</id>
    </interactant>
    <interactant intactId="EBI-2688184">
        <id>Q9UQR1</id>
        <label>ZNF148</label>
    </interactant>
    <organismsDiffer>false</organismsDiffer>
    <experiments>3</experiments>
</comment>
<comment type="interaction">
    <interactant intactId="EBI-948001">
        <id>Q15323</id>
    </interactant>
    <interactant intactId="EBI-717634">
        <id>P17024</id>
        <label>ZNF20</label>
    </interactant>
    <organismsDiffer>false</organismsDiffer>
    <experiments>3</experiments>
</comment>
<comment type="interaction">
    <interactant intactId="EBI-948001">
        <id>Q15323</id>
    </interactant>
    <interactant intactId="EBI-10177272">
        <id>P15622-3</id>
        <label>ZNF250</label>
    </interactant>
    <organismsDiffer>false</organismsDiffer>
    <experiments>3</experiments>
</comment>
<comment type="interaction">
    <interactant intactId="EBI-948001">
        <id>Q15323</id>
    </interactant>
    <interactant intactId="EBI-744257">
        <id>Q96IQ9</id>
        <label>ZNF414</label>
    </interactant>
    <organismsDiffer>false</organismsDiffer>
    <experiments>3</experiments>
</comment>
<comment type="interaction">
    <interactant intactId="EBI-948001">
        <id>Q15323</id>
    </interactant>
    <interactant intactId="EBI-740727">
        <id>Q8TAU3</id>
        <label>ZNF417</label>
    </interactant>
    <organismsDiffer>false</organismsDiffer>
    <experiments>3</experiments>
</comment>
<comment type="interaction">
    <interactant intactId="EBI-948001">
        <id>Q15323</id>
    </interactant>
    <interactant intactId="EBI-740232">
        <id>Q9NWS9-2</id>
        <label>ZNF446</label>
    </interactant>
    <organismsDiffer>false</organismsDiffer>
    <experiments>3</experiments>
</comment>
<comment type="interaction">
    <interactant intactId="EBI-948001">
        <id>Q15323</id>
    </interactant>
    <interactant intactId="EBI-10273713">
        <id>Q8TBZ8</id>
        <label>ZNF564</label>
    </interactant>
    <organismsDiffer>false</organismsDiffer>
    <experiments>3</experiments>
</comment>
<comment type="interaction">
    <interactant intactId="EBI-948001">
        <id>Q15323</id>
    </interactant>
    <interactant intactId="EBI-4395687">
        <id>Q5MCW4</id>
        <label>ZNF569</label>
    </interactant>
    <organismsDiffer>false</organismsDiffer>
    <experiments>6</experiments>
</comment>
<comment type="interaction">
    <interactant intactId="EBI-948001">
        <id>Q15323</id>
    </interactant>
    <interactant intactId="EBI-10172590">
        <id>Q7Z3I7</id>
        <label>ZNF572</label>
    </interactant>
    <organismsDiffer>false</organismsDiffer>
    <experiments>3</experiments>
</comment>
<comment type="interaction">
    <interactant intactId="EBI-948001">
        <id>Q15323</id>
    </interactant>
    <interactant intactId="EBI-6427977">
        <id>Q96SQ5</id>
        <label>ZNF587</label>
    </interactant>
    <organismsDiffer>false</organismsDiffer>
    <experiments>3</experiments>
</comment>
<comment type="interaction">
    <interactant intactId="EBI-948001">
        <id>Q15323</id>
    </interactant>
    <interactant intactId="EBI-16429014">
        <id>A0A0S2Z5X4</id>
        <label>ZNF688</label>
    </interactant>
    <organismsDiffer>false</organismsDiffer>
    <experiments>3</experiments>
</comment>
<comment type="interaction">
    <interactant intactId="EBI-948001">
        <id>Q15323</id>
    </interactant>
    <interactant intactId="EBI-16429989">
        <id>A0A0S2Z6P0</id>
        <label>ZNF688</label>
    </interactant>
    <organismsDiffer>false</organismsDiffer>
    <experiments>3</experiments>
</comment>
<comment type="interaction">
    <interactant intactId="EBI-948001">
        <id>Q15323</id>
    </interactant>
    <interactant intactId="EBI-10320266">
        <id>Q9UC07</id>
        <label>ZNF69</label>
    </interactant>
    <organismsDiffer>false</organismsDiffer>
    <experiments>3</experiments>
</comment>
<comment type="interaction">
    <interactant intactId="EBI-948001">
        <id>Q15323</id>
    </interactant>
    <interactant intactId="EBI-12310821">
        <id>Q9UC07-2</id>
        <label>ZNF69</label>
    </interactant>
    <organismsDiffer>false</organismsDiffer>
    <experiments>3</experiments>
</comment>
<comment type="interaction">
    <interactant intactId="EBI-948001">
        <id>Q15323</id>
    </interactant>
    <interactant intactId="EBI-5667516">
        <id>Q9Y2P0</id>
        <label>ZNF835</label>
    </interactant>
    <organismsDiffer>false</organismsDiffer>
    <experiments>3</experiments>
</comment>
<comment type="interaction">
    <interactant intactId="EBI-948001">
        <id>Q15323</id>
    </interactant>
    <interactant intactId="EBI-10242473">
        <id>Q53FW8</id>
    </interactant>
    <organismsDiffer>false</organismsDiffer>
    <experiments>3</experiments>
</comment>
<comment type="interaction">
    <interactant intactId="EBI-948001">
        <id>Q15323</id>
    </interactant>
    <interactant intactId="EBI-10268244">
        <id>Q8N9J2</id>
    </interactant>
    <organismsDiffer>false</organismsDiffer>
    <experiments>3</experiments>
</comment>
<comment type="interaction">
    <interactant intactId="EBI-948001">
        <id>Q15323</id>
    </interactant>
    <interactant intactId="EBI-25492395">
        <id>PRO_0000449633</id>
        <label>rep</label>
        <dbReference type="UniProtKB" id="P0DTD1"/>
    </interactant>
    <organismsDiffer>true</organismsDiffer>
    <experiments>3</experiments>
</comment>
<comment type="tissue specificity">
    <text evidence="2 3">Present in scalp but not in hairless skin. Abundantly expressed in the differentiating cortex of growing (anagen) hair. Expression is restricted to the keratinocytes of the hair cortex and is absent from inner root sheath and medulla.</text>
</comment>
<comment type="miscellaneous">
    <text>There are two types of hair/microfibrillar keratin, I (acidic) and II (neutral to basic).</text>
</comment>
<comment type="similarity">
    <text evidence="1">Belongs to the intermediate filament family.</text>
</comment>
<organism>
    <name type="scientific">Homo sapiens</name>
    <name type="common">Human</name>
    <dbReference type="NCBI Taxonomy" id="9606"/>
    <lineage>
        <taxon>Eukaryota</taxon>
        <taxon>Metazoa</taxon>
        <taxon>Chordata</taxon>
        <taxon>Craniata</taxon>
        <taxon>Vertebrata</taxon>
        <taxon>Euteleostomi</taxon>
        <taxon>Mammalia</taxon>
        <taxon>Eutheria</taxon>
        <taxon>Euarchontoglires</taxon>
        <taxon>Primates</taxon>
        <taxon>Haplorrhini</taxon>
        <taxon>Catarrhini</taxon>
        <taxon>Hominidae</taxon>
        <taxon>Homo</taxon>
    </lineage>
</organism>
<evidence type="ECO:0000255" key="1">
    <source>
        <dbReference type="PROSITE-ProRule" id="PRU01188"/>
    </source>
</evidence>
<evidence type="ECO:0000269" key="2">
    <source>
    </source>
</evidence>
<evidence type="ECO:0000269" key="3">
    <source>
    </source>
</evidence>
<evidence type="ECO:0000305" key="4"/>
<accession>Q15323</accession>
<accession>Q9UE12</accession>
<sequence length="416" mass="47237">MPYNFCLPSLSCRTSCSSRPCVPPSCHSCTLPGACNIPANVSNCNWFCEGSFNGSEKETMQFLNDRLASYLEKVRQLERDNAELENLIRERSQQQEPLLCPSYQSYFKTIEELQQKILCTKSENARLVVQIDNAKLAADDFRTKYQTELSLRQLVESDINGLRRILDELTLCKSDLEAQVESLKEELLCLKSNHEQEVNTLRCQLGDRLNVEVDAAPTVDLNRVLNETRSQYEALVETNRREVEQWFTTQTEELNKQVVSSSEQLQSYQAEIIELRRTVNALEIELQAQHNLRDSLENTLTESEARYSSQLSQVQSLITNVESQLAEIRSDLERQNQEYQVLLDVRARLECEINTYRSLLESEDCNLPSNPCATTNACSKPIGPCLSNPCTSCVPPAPCTPCAPRPRCGPCNSFVR</sequence>
<name>K1H1_HUMAN</name>
<gene>
    <name type="primary">KRT31</name>
    <name type="synonym">HHA1</name>
    <name type="synonym">HKA1</name>
    <name type="synonym">KRTHA1</name>
</gene>
<feature type="chain" id="PRO_0000063684" description="Keratin, type I cuticular Ha1">
    <location>
        <begin position="1"/>
        <end position="416"/>
    </location>
</feature>
<feature type="domain" description="IF rod" evidence="1">
    <location>
        <begin position="56"/>
        <end position="367"/>
    </location>
</feature>
<feature type="region of interest" description="Head">
    <location>
        <begin position="1"/>
        <end position="56"/>
    </location>
</feature>
<feature type="region of interest" description="Coil 1A">
    <location>
        <begin position="57"/>
        <end position="91"/>
    </location>
</feature>
<feature type="region of interest" description="Linker 1">
    <location>
        <begin position="92"/>
        <end position="102"/>
    </location>
</feature>
<feature type="region of interest" description="Coil 1B">
    <location>
        <begin position="103"/>
        <end position="203"/>
    </location>
</feature>
<feature type="region of interest" description="Linker 12">
    <location>
        <begin position="204"/>
        <end position="219"/>
    </location>
</feature>
<feature type="region of interest" description="Coil 2">
    <location>
        <begin position="220"/>
        <end position="363"/>
    </location>
</feature>
<feature type="region of interest" description="Tail">
    <location>
        <begin position="364"/>
        <end position="416"/>
    </location>
</feature>
<feature type="site" description="Stutter">
    <location>
        <position position="305"/>
    </location>
</feature>
<feature type="sequence variant" id="VAR_046989" description="In dbSNP:rs6503628.">
    <original>A</original>
    <variation>G</variation>
    <location>
        <position position="39"/>
    </location>
</feature>
<feature type="sequence variant" id="VAR_046990" description="In dbSNP:rs6503627.">
    <original>A</original>
    <variation>V</variation>
    <location>
        <position position="82"/>
    </location>
</feature>
<feature type="sequence variant" id="VAR_046991" description="In dbSNP:rs34293483.">
    <original>A</original>
    <variation>V</variation>
    <location>
        <position position="377"/>
    </location>
</feature>
<feature type="sequence conflict" description="In Ref. 1; CAA60378." evidence="4" ref="1">
    <original>QL</original>
    <variation>HV</variation>
    <location>
        <begin position="153"/>
        <end position="154"/>
    </location>
</feature>
<reference key="1">
    <citation type="journal article" date="1995" name="Biochim. Biophys. Acta">
        <title>A cDNA encoding the human type I hair keratin hHal.</title>
        <authorList>
            <person name="Fink P."/>
            <person name="Rogers M.A."/>
            <person name="Krieg T."/>
            <person name="Winter H."/>
            <person name="Schweizer J."/>
        </authorList>
    </citation>
    <scope>NUCLEOTIDE SEQUENCE [MRNA]</scope>
    <source>
        <tissue>Hair</tissue>
    </source>
</reference>
<reference key="2">
    <citation type="submission" date="1998-03" db="EMBL/GenBank/DDBJ databases">
        <authorList>
            <person name="Rogers M.A."/>
        </authorList>
    </citation>
    <scope>SEQUENCE REVISION</scope>
</reference>
<reference key="3">
    <citation type="journal article" date="1998" name="J. Biol. Chem.">
        <title>Characterization of a 190-kilobase pair domain of human type I hair keratin genes.</title>
        <authorList>
            <person name="Rogers M.A."/>
            <person name="Winter H."/>
            <person name="Wolf C."/>
            <person name="Heck M."/>
            <person name="Schweizer J."/>
        </authorList>
    </citation>
    <scope>NUCLEOTIDE SEQUENCE [GENOMIC DNA]</scope>
    <scope>TISSUE SPECIFICITY</scope>
</reference>
<reference key="4">
    <citation type="submission" date="2005-07" db="EMBL/GenBank/DDBJ databases">
        <authorList>
            <person name="Mural R.J."/>
            <person name="Istrail S."/>
            <person name="Sutton G.G."/>
            <person name="Florea L."/>
            <person name="Halpern A.L."/>
            <person name="Mobarry C.M."/>
            <person name="Lippert R."/>
            <person name="Walenz B."/>
            <person name="Shatkay H."/>
            <person name="Dew I."/>
            <person name="Miller J.R."/>
            <person name="Flanigan M.J."/>
            <person name="Edwards N.J."/>
            <person name="Bolanos R."/>
            <person name="Fasulo D."/>
            <person name="Halldorsson B.V."/>
            <person name="Hannenhalli S."/>
            <person name="Turner R."/>
            <person name="Yooseph S."/>
            <person name="Lu F."/>
            <person name="Nusskern D.R."/>
            <person name="Shue B.C."/>
            <person name="Zheng X.H."/>
            <person name="Zhong F."/>
            <person name="Delcher A.L."/>
            <person name="Huson D.H."/>
            <person name="Kravitz S.A."/>
            <person name="Mouchard L."/>
            <person name="Reinert K."/>
            <person name="Remington K.A."/>
            <person name="Clark A.G."/>
            <person name="Waterman M.S."/>
            <person name="Eichler E.E."/>
            <person name="Adams M.D."/>
            <person name="Hunkapiller M.W."/>
            <person name="Myers E.W."/>
            <person name="Venter J.C."/>
        </authorList>
    </citation>
    <scope>NUCLEOTIDE SEQUENCE [LARGE SCALE GENOMIC DNA]</scope>
</reference>
<reference key="5">
    <citation type="journal article" date="2004" name="Genome Res.">
        <title>The status, quality, and expansion of the NIH full-length cDNA project: the Mammalian Gene Collection (MGC).</title>
        <authorList>
            <consortium name="The MGC Project Team"/>
        </authorList>
    </citation>
    <scope>NUCLEOTIDE SEQUENCE [LARGE SCALE MRNA]</scope>
</reference>
<reference key="6">
    <citation type="journal article" date="1998" name="J. Invest. Dermatol.">
        <title>Characterization and chromosomal localization of human hair-specific keratin genes and comparative expression during the hair growth cycle.</title>
        <authorList>
            <person name="Bowden P.E."/>
            <person name="Hainey S.D."/>
            <person name="Parker G."/>
            <person name="Jones D.O."/>
            <person name="Zimonjic D."/>
            <person name="Popescu N."/>
            <person name="Hodgins M.B."/>
        </authorList>
    </citation>
    <scope>TISSUE SPECIFICITY</scope>
</reference>